<protein>
    <recommendedName>
        <fullName evidence="27">Ankyrin-1</fullName>
        <shortName>ANK-1</shortName>
    </recommendedName>
    <alternativeName>
        <fullName>Ankyrin-R</fullName>
    </alternativeName>
    <alternativeName>
        <fullName>Erythrocyte ankyrin</fullName>
    </alternativeName>
</protein>
<organism>
    <name type="scientific">Homo sapiens</name>
    <name type="common">Human</name>
    <dbReference type="NCBI Taxonomy" id="9606"/>
    <lineage>
        <taxon>Eukaryota</taxon>
        <taxon>Metazoa</taxon>
        <taxon>Chordata</taxon>
        <taxon>Craniata</taxon>
        <taxon>Vertebrata</taxon>
        <taxon>Euteleostomi</taxon>
        <taxon>Mammalia</taxon>
        <taxon>Eutheria</taxon>
        <taxon>Euarchontoglires</taxon>
        <taxon>Primates</taxon>
        <taxon>Haplorrhini</taxon>
        <taxon>Catarrhini</taxon>
        <taxon>Hominidae</taxon>
        <taxon>Homo</taxon>
    </lineage>
</organism>
<evidence type="ECO:0000250" key="1"/>
<evidence type="ECO:0000250" key="2">
    <source>
        <dbReference type="UniProtKB" id="Q02357"/>
    </source>
</evidence>
<evidence type="ECO:0000255" key="3">
    <source>
        <dbReference type="PROSITE-ProRule" id="PRU00064"/>
    </source>
</evidence>
<evidence type="ECO:0000255" key="4">
    <source>
        <dbReference type="PROSITE-ProRule" id="PRU00485"/>
    </source>
</evidence>
<evidence type="ECO:0000256" key="5">
    <source>
        <dbReference type="SAM" id="MobiDB-lite"/>
    </source>
</evidence>
<evidence type="ECO:0000269" key="6">
    <source>
    </source>
</evidence>
<evidence type="ECO:0000269" key="7">
    <source>
    </source>
</evidence>
<evidence type="ECO:0000269" key="8">
    <source>
    </source>
</evidence>
<evidence type="ECO:0000269" key="9">
    <source>
    </source>
</evidence>
<evidence type="ECO:0000269" key="10">
    <source>
    </source>
</evidence>
<evidence type="ECO:0000269" key="11">
    <source>
    </source>
</evidence>
<evidence type="ECO:0000269" key="12">
    <source>
    </source>
</evidence>
<evidence type="ECO:0000269" key="13">
    <source>
    </source>
</evidence>
<evidence type="ECO:0000269" key="14">
    <source>
    </source>
</evidence>
<evidence type="ECO:0000269" key="15">
    <source>
    </source>
</evidence>
<evidence type="ECO:0000269" key="16">
    <source>
    </source>
</evidence>
<evidence type="ECO:0000269" key="17">
    <source>
    </source>
</evidence>
<evidence type="ECO:0000269" key="18">
    <source>
    </source>
</evidence>
<evidence type="ECO:0000269" key="19">
    <source>
    </source>
</evidence>
<evidence type="ECO:0000269" key="20">
    <source>
    </source>
</evidence>
<evidence type="ECO:0000269" key="21">
    <source ref="5"/>
</evidence>
<evidence type="ECO:0000303" key="22">
    <source>
    </source>
</evidence>
<evidence type="ECO:0000303" key="23">
    <source>
    </source>
</evidence>
<evidence type="ECO:0000303" key="24">
    <source>
    </source>
</evidence>
<evidence type="ECO:0000303" key="25">
    <source>
    </source>
</evidence>
<evidence type="ECO:0000303" key="26">
    <source ref="5"/>
</evidence>
<evidence type="ECO:0000305" key="27"/>
<evidence type="ECO:0000312" key="28">
    <source>
        <dbReference type="HGNC" id="HGNC:492"/>
    </source>
</evidence>
<evidence type="ECO:0007744" key="29">
    <source>
        <dbReference type="PDB" id="1N11"/>
    </source>
</evidence>
<evidence type="ECO:0007744" key="30">
    <source>
        <dbReference type="PDB" id="3UD1"/>
    </source>
</evidence>
<evidence type="ECO:0007744" key="31">
    <source>
        <dbReference type="PDB" id="3UD2"/>
    </source>
</evidence>
<evidence type="ECO:0007744" key="32">
    <source>
        <dbReference type="PDB" id="7UZQ"/>
    </source>
</evidence>
<evidence type="ECO:0007744" key="33">
    <source>
        <dbReference type="PDB" id="7UZU"/>
    </source>
</evidence>
<evidence type="ECO:0007744" key="34">
    <source>
        <dbReference type="PDB" id="7V0K"/>
    </source>
</evidence>
<evidence type="ECO:0007744" key="35">
    <source>
        <dbReference type="PDB" id="7V0M"/>
    </source>
</evidence>
<evidence type="ECO:0007744" key="36">
    <source>
        <dbReference type="PDB" id="7V0S"/>
    </source>
</evidence>
<evidence type="ECO:0007744" key="37">
    <source>
        <dbReference type="PDB" id="7V0X"/>
    </source>
</evidence>
<evidence type="ECO:0007744" key="38">
    <source>
        <dbReference type="PDB" id="8CS9"/>
    </source>
</evidence>
<evidence type="ECO:0007744" key="39">
    <source>
        <dbReference type="PDB" id="8CSL"/>
    </source>
</evidence>
<evidence type="ECO:0007744" key="40">
    <source>
        <dbReference type="PDB" id="8CSV"/>
    </source>
</evidence>
<evidence type="ECO:0007744" key="41">
    <source>
        <dbReference type="PDB" id="8CTE"/>
    </source>
</evidence>
<evidence type="ECO:0007744" key="42">
    <source>
    </source>
</evidence>
<evidence type="ECO:0007744" key="43">
    <source>
    </source>
</evidence>
<evidence type="ECO:0007829" key="44">
    <source>
        <dbReference type="PDB" id="1N11"/>
    </source>
</evidence>
<evidence type="ECO:0007829" key="45">
    <source>
        <dbReference type="PDB" id="2YVI"/>
    </source>
</evidence>
<evidence type="ECO:0007829" key="46">
    <source>
        <dbReference type="PDB" id="3F59"/>
    </source>
</evidence>
<evidence type="ECO:0007829" key="47">
    <source>
        <dbReference type="PDB" id="3KBT"/>
    </source>
</evidence>
<evidence type="ECO:0007829" key="48">
    <source>
        <dbReference type="PDB" id="3KBU"/>
    </source>
</evidence>
<evidence type="ECO:0007829" key="49">
    <source>
        <dbReference type="PDB" id="3UD1"/>
    </source>
</evidence>
<evidence type="ECO:0007829" key="50">
    <source>
        <dbReference type="PDB" id="3UD2"/>
    </source>
</evidence>
<evidence type="ECO:0007829" key="51">
    <source>
        <dbReference type="PDB" id="7UZQ"/>
    </source>
</evidence>
<evidence type="ECO:0007829" key="52">
    <source>
        <dbReference type="PDB" id="7UZU"/>
    </source>
</evidence>
<sequence length="1881" mass="206265">MPYSVGFREADAATSFLRAARSGNLDKALDHLRNGVDINTCNQNGLNGLHLASKEGHVKMVVELLHKEIILETTTKKGNTALHIAALAGQDEVVRELVNYGANVNAQSQKGFTPLYMAAQENHLEVVKFLLENGANQNVATEDGFTPLAVALQQGHENVVAHLINYGTKGKVRLPALHIAARNDDTRTAAVLLQNDPNPDVLSKTGFTPLHIAAHYENLNVAQLLLNRGASVNFTPQNGITPLHIASRRGNVIMVRLLLDRGAQIETKTKDELTPLHCAARNGHVRISEILLDHGAPIQAKTKNGLSPIHMAAQGDHLDCVRLLLQYDAEIDDITLDHLTPLHVAAHCGHHRVAKVLLDKGAKPNSRALNGFTPLHIACKKNHVRVMELLLKTGASIDAVTESGLTPLHVASFMGHLPIVKNLLQRGASPNVSNVKVETPLHMAARAGHTEVAKYLLQNKAKVNAKAKDDQTPLHCAARIGHTNMVKLLLENNANPNLATTAGHTPLHIAAREGHVETVLALLEKEASQACMTKKGFTPLHVAAKYGKVRVAELLLERDAHPNAAGKNGLTPLHVAVHHNNLDIVKLLLPRGGSPHSPAWNGYTPLHIAAKQNQVEVARSLLQYGGSANAESVQGVTPLHLAAQEGHAEMVALLLSKQANGNLGNKSGLTPLHLVAQEGHVPVADVLIKHGVMVDATTRMGYTPLHVASHYGNIKLVKFLLQHQADVNAKTKLGYSPLHQAAQQGHTDIVTLLLKNGASPNEVSSDGTTPLAIAKRLGYISVTDVLKVVTDETSFVLVSDKHRMSFPETVDEILDVSEDEGEELISFKAERRDSRDVDEEKELLDFVPKLDQVVESPAIPRIPCAMPETVVIRSEEQEQASKEYDEDSLIPSSPATETSDNISPVASPVHTGFLVSFMVDARGGSMRGSRHNGLRVVIPPRTCAAPTRITCRLVKPQKLSTPPPLAEEEGLASRIIALGPTGAQFLSPVIVEIPHFASHGRGDRELVVLRSENGSVWKEHRSRYGESYLDQILNGMDEELGSLEELEKKRVCRIITTDFPLYFVIMSRLCQDYDTIGPEGGSLKSKLVPLVQATFPENAVTKRVKLALQAQPVPDELVTKLLGNQATFSPIVTVEPRRRKFHRPIGLRIPLPPSWTDNPRDSGEGDTTSLRLLCSVIGGTDQAQWEDITGTTKLVYANECANFTTNVSARFWLSDCPRTAEAVNFATLLYKELTAVPYMAKFVIFAKMNDPREGRLRCYCMTDDKVDKTLEQHENFVEVARSRDIEVLEGMSLFAELSGNLVPVKKAAQQRSFHFQSFRENRLAMPVKVRDSSREPGGSLSFLRKAMKYEDTQHILCHLNITMPPCAKGSGAEDRRRTPTPLALRYSILSESTPGSLSGTEQAEMKMAVISEHLGLSWAELARELQFSVEDINRIRVENPNSLLEQSVALLNLWVIREGQNANMENLYTALQSIDRGEIVNMLEGSGRQSRNLKPDRRHTDRDYSLSPSQMNGYSSLQDELLSPASLGCALSSPLRADQYWNEVAVLDAIPLAATEHDTMLEMSDMQVWSAGLTPSLVTAEDSSLECSKAEDSDATGHEWKLEGALSEEPRGPELGSLELVEDDTVDSDATNGLIDLLEQEEGQRSEEKLPGSKRQDDATGAGQDSENEVSLVSGHQRGQARITHSPTVSQVTERSQDRLQDWDADGSIVSYLQDAAQGSWQEEVTQGPHSFQGTSTMTEGLEPGGSQEYEKVLVSVSEHTWTEQPEAESSQADRDRRQQGQEEQVQEAKNTFTQVVQGNEFQNIPGEQVTEEQFTDEQGNIVTKKIIRKVVRQIDLSSADAAQEHEEVTVEGPLEDPSELEVDIDYFMKHSKDHTSTPNP</sequence>
<name>ANK1_HUMAN</name>
<keyword id="KW-0002">3D-structure</keyword>
<keyword id="KW-0877">Alternative promoter usage</keyword>
<keyword id="KW-0025">Alternative splicing</keyword>
<keyword id="KW-0040">ANK repeat</keyword>
<keyword id="KW-0963">Cytoplasm</keyword>
<keyword id="KW-0206">Cytoskeleton</keyword>
<keyword id="KW-0903">Direct protein sequencing</keyword>
<keyword id="KW-0225">Disease variant</keyword>
<keyword id="KW-0250">Elliptocytosis</keyword>
<keyword id="KW-0360">Hereditary hemolytic anemia</keyword>
<keyword id="KW-0379">Hydroxylation</keyword>
<keyword id="KW-0449">Lipoprotein</keyword>
<keyword id="KW-0472">Membrane</keyword>
<keyword id="KW-0597">Phosphoprotein</keyword>
<keyword id="KW-1267">Proteomics identification</keyword>
<keyword id="KW-1185">Reference proteome</keyword>
<keyword id="KW-0677">Repeat</keyword>
<keyword id="KW-0703">Sarcoplasmic reticulum</keyword>
<dbReference type="EMBL" id="X16609">
    <property type="protein sequence ID" value="CAA34610.1"/>
    <property type="molecule type" value="mRNA"/>
</dbReference>
<dbReference type="EMBL" id="X16609">
    <property type="protein sequence ID" value="CAA34611.1"/>
    <property type="molecule type" value="mRNA"/>
</dbReference>
<dbReference type="EMBL" id="M28880">
    <property type="protein sequence ID" value="AAA51732.1"/>
    <property type="molecule type" value="mRNA"/>
</dbReference>
<dbReference type="EMBL" id="U50133">
    <property type="protein sequence ID" value="AAB47805.1"/>
    <property type="status" value="ALT_SEQ"/>
    <property type="molecule type" value="Genomic_DNA"/>
</dbReference>
<dbReference type="EMBL" id="U50092">
    <property type="protein sequence ID" value="AAB47805.1"/>
    <property type="status" value="JOINED"/>
    <property type="molecule type" value="Genomic_DNA"/>
</dbReference>
<dbReference type="EMBL" id="U50093">
    <property type="protein sequence ID" value="AAB47805.1"/>
    <property type="status" value="JOINED"/>
    <property type="molecule type" value="Genomic_DNA"/>
</dbReference>
<dbReference type="EMBL" id="U50094">
    <property type="protein sequence ID" value="AAB47805.1"/>
    <property type="status" value="JOINED"/>
    <property type="molecule type" value="Genomic_DNA"/>
</dbReference>
<dbReference type="EMBL" id="U50095">
    <property type="protein sequence ID" value="AAB47805.1"/>
    <property type="status" value="JOINED"/>
    <property type="molecule type" value="Genomic_DNA"/>
</dbReference>
<dbReference type="EMBL" id="U50096">
    <property type="protein sequence ID" value="AAB47805.1"/>
    <property type="status" value="JOINED"/>
    <property type="molecule type" value="Genomic_DNA"/>
</dbReference>
<dbReference type="EMBL" id="U50097">
    <property type="protein sequence ID" value="AAB47805.1"/>
    <property type="status" value="JOINED"/>
    <property type="molecule type" value="Genomic_DNA"/>
</dbReference>
<dbReference type="EMBL" id="U50098">
    <property type="protein sequence ID" value="AAB47805.1"/>
    <property type="status" value="JOINED"/>
    <property type="molecule type" value="Genomic_DNA"/>
</dbReference>
<dbReference type="EMBL" id="U50099">
    <property type="protein sequence ID" value="AAB47805.1"/>
    <property type="status" value="JOINED"/>
    <property type="molecule type" value="Genomic_DNA"/>
</dbReference>
<dbReference type="EMBL" id="U50100">
    <property type="protein sequence ID" value="AAB47805.1"/>
    <property type="status" value="JOINED"/>
    <property type="molecule type" value="Genomic_DNA"/>
</dbReference>
<dbReference type="EMBL" id="U50101">
    <property type="protein sequence ID" value="AAB47805.1"/>
    <property type="status" value="JOINED"/>
    <property type="molecule type" value="Genomic_DNA"/>
</dbReference>
<dbReference type="EMBL" id="U50102">
    <property type="protein sequence ID" value="AAB47805.1"/>
    <property type="status" value="JOINED"/>
    <property type="molecule type" value="Genomic_DNA"/>
</dbReference>
<dbReference type="EMBL" id="U50103">
    <property type="protein sequence ID" value="AAB47805.1"/>
    <property type="status" value="JOINED"/>
    <property type="molecule type" value="Genomic_DNA"/>
</dbReference>
<dbReference type="EMBL" id="U50104">
    <property type="protein sequence ID" value="AAB47805.1"/>
    <property type="status" value="JOINED"/>
    <property type="molecule type" value="Genomic_DNA"/>
</dbReference>
<dbReference type="EMBL" id="U50105">
    <property type="protein sequence ID" value="AAB47805.1"/>
    <property type="status" value="JOINED"/>
    <property type="molecule type" value="Genomic_DNA"/>
</dbReference>
<dbReference type="EMBL" id="U50106">
    <property type="protein sequence ID" value="AAB47805.1"/>
    <property type="status" value="JOINED"/>
    <property type="molecule type" value="Genomic_DNA"/>
</dbReference>
<dbReference type="EMBL" id="U50107">
    <property type="protein sequence ID" value="AAB47805.1"/>
    <property type="status" value="JOINED"/>
    <property type="molecule type" value="Genomic_DNA"/>
</dbReference>
<dbReference type="EMBL" id="U50108">
    <property type="protein sequence ID" value="AAB47805.1"/>
    <property type="status" value="JOINED"/>
    <property type="molecule type" value="Genomic_DNA"/>
</dbReference>
<dbReference type="EMBL" id="U50109">
    <property type="protein sequence ID" value="AAB47805.1"/>
    <property type="status" value="JOINED"/>
    <property type="molecule type" value="Genomic_DNA"/>
</dbReference>
<dbReference type="EMBL" id="U50110">
    <property type="protein sequence ID" value="AAB47805.1"/>
    <property type="status" value="JOINED"/>
    <property type="molecule type" value="Genomic_DNA"/>
</dbReference>
<dbReference type="EMBL" id="U50111">
    <property type="protein sequence ID" value="AAB47805.1"/>
    <property type="status" value="JOINED"/>
    <property type="molecule type" value="Genomic_DNA"/>
</dbReference>
<dbReference type="EMBL" id="U50112">
    <property type="protein sequence ID" value="AAB47805.1"/>
    <property type="status" value="JOINED"/>
    <property type="molecule type" value="Genomic_DNA"/>
</dbReference>
<dbReference type="EMBL" id="U50113">
    <property type="protein sequence ID" value="AAB47805.1"/>
    <property type="status" value="JOINED"/>
    <property type="molecule type" value="Genomic_DNA"/>
</dbReference>
<dbReference type="EMBL" id="U50114">
    <property type="protein sequence ID" value="AAB47805.1"/>
    <property type="status" value="JOINED"/>
    <property type="molecule type" value="Genomic_DNA"/>
</dbReference>
<dbReference type="EMBL" id="U50115">
    <property type="protein sequence ID" value="AAB47805.1"/>
    <property type="status" value="JOINED"/>
    <property type="molecule type" value="Genomic_DNA"/>
</dbReference>
<dbReference type="EMBL" id="U50116">
    <property type="protein sequence ID" value="AAB47805.1"/>
    <property type="status" value="JOINED"/>
    <property type="molecule type" value="Genomic_DNA"/>
</dbReference>
<dbReference type="EMBL" id="U50117">
    <property type="protein sequence ID" value="AAB47805.1"/>
    <property type="status" value="JOINED"/>
    <property type="molecule type" value="Genomic_DNA"/>
</dbReference>
<dbReference type="EMBL" id="U50118">
    <property type="protein sequence ID" value="AAB47805.1"/>
    <property type="status" value="JOINED"/>
    <property type="molecule type" value="Genomic_DNA"/>
</dbReference>
<dbReference type="EMBL" id="U50119">
    <property type="protein sequence ID" value="AAB47805.1"/>
    <property type="status" value="JOINED"/>
    <property type="molecule type" value="Genomic_DNA"/>
</dbReference>
<dbReference type="EMBL" id="U50120">
    <property type="protein sequence ID" value="AAB47805.1"/>
    <property type="status" value="JOINED"/>
    <property type="molecule type" value="Genomic_DNA"/>
</dbReference>
<dbReference type="EMBL" id="U50121">
    <property type="protein sequence ID" value="AAB47805.1"/>
    <property type="status" value="JOINED"/>
    <property type="molecule type" value="Genomic_DNA"/>
</dbReference>
<dbReference type="EMBL" id="U50122">
    <property type="protein sequence ID" value="AAB47805.1"/>
    <property type="status" value="JOINED"/>
    <property type="molecule type" value="Genomic_DNA"/>
</dbReference>
<dbReference type="EMBL" id="U50123">
    <property type="protein sequence ID" value="AAB47805.1"/>
    <property type="status" value="JOINED"/>
    <property type="molecule type" value="Genomic_DNA"/>
</dbReference>
<dbReference type="EMBL" id="U50124">
    <property type="protein sequence ID" value="AAB47805.1"/>
    <property type="status" value="JOINED"/>
    <property type="molecule type" value="Genomic_DNA"/>
</dbReference>
<dbReference type="EMBL" id="U50125">
    <property type="protein sequence ID" value="AAB47805.1"/>
    <property type="status" value="JOINED"/>
    <property type="molecule type" value="Genomic_DNA"/>
</dbReference>
<dbReference type="EMBL" id="U50126">
    <property type="protein sequence ID" value="AAB47805.1"/>
    <property type="status" value="JOINED"/>
    <property type="molecule type" value="Genomic_DNA"/>
</dbReference>
<dbReference type="EMBL" id="U50127">
    <property type="protein sequence ID" value="AAB47805.1"/>
    <property type="status" value="JOINED"/>
    <property type="molecule type" value="Genomic_DNA"/>
</dbReference>
<dbReference type="EMBL" id="U50128">
    <property type="protein sequence ID" value="AAB47805.1"/>
    <property type="status" value="JOINED"/>
    <property type="molecule type" value="Genomic_DNA"/>
</dbReference>
<dbReference type="EMBL" id="U50129">
    <property type="protein sequence ID" value="AAB47805.1"/>
    <property type="status" value="JOINED"/>
    <property type="molecule type" value="Genomic_DNA"/>
</dbReference>
<dbReference type="EMBL" id="U50130">
    <property type="protein sequence ID" value="AAB47805.1"/>
    <property type="status" value="JOINED"/>
    <property type="molecule type" value="Genomic_DNA"/>
</dbReference>
<dbReference type="EMBL" id="U50131">
    <property type="protein sequence ID" value="AAB47805.1"/>
    <property type="status" value="JOINED"/>
    <property type="molecule type" value="Genomic_DNA"/>
</dbReference>
<dbReference type="EMBL" id="U50132">
    <property type="protein sequence ID" value="AAB47805.1"/>
    <property type="status" value="JOINED"/>
    <property type="molecule type" value="Genomic_DNA"/>
</dbReference>
<dbReference type="EMBL" id="AF005213">
    <property type="protein sequence ID" value="AAC01950.1"/>
    <property type="molecule type" value="mRNA"/>
</dbReference>
<dbReference type="EMBL" id="AB209418">
    <property type="protein sequence ID" value="BAD92655.1"/>
    <property type="molecule type" value="mRNA"/>
</dbReference>
<dbReference type="EMBL" id="AK223578">
    <property type="protein sequence ID" value="BAD97298.1"/>
    <property type="molecule type" value="mRNA"/>
</dbReference>
<dbReference type="EMBL" id="AC027702">
    <property type="status" value="NOT_ANNOTATED_CDS"/>
    <property type="molecule type" value="Genomic_DNA"/>
</dbReference>
<dbReference type="EMBL" id="AC113133">
    <property type="status" value="NOT_ANNOTATED_CDS"/>
    <property type="molecule type" value="Genomic_DNA"/>
</dbReference>
<dbReference type="EMBL" id="CH471080">
    <property type="protein sequence ID" value="EAW63243.1"/>
    <property type="molecule type" value="Genomic_DNA"/>
</dbReference>
<dbReference type="EMBL" id="CH471080">
    <property type="protein sequence ID" value="EAW63244.1"/>
    <property type="molecule type" value="Genomic_DNA"/>
</dbReference>
<dbReference type="EMBL" id="BC030957">
    <property type="protein sequence ID" value="AAH30957.1"/>
    <property type="molecule type" value="mRNA"/>
</dbReference>
<dbReference type="EMBL" id="BC117121">
    <property type="protein sequence ID" value="AAI17122.1"/>
    <property type="molecule type" value="mRNA"/>
</dbReference>
<dbReference type="EMBL" id="BC014467">
    <property type="status" value="NOT_ANNOTATED_CDS"/>
    <property type="molecule type" value="mRNA"/>
</dbReference>
<dbReference type="CCDS" id="CCDS47849.1">
    <molecule id="P16157-21"/>
</dbReference>
<dbReference type="CCDS" id="CCDS55227.1">
    <molecule id="P16157-23"/>
</dbReference>
<dbReference type="CCDS" id="CCDS6119.1">
    <molecule id="P16157-1"/>
</dbReference>
<dbReference type="CCDS" id="CCDS6120.1">
    <molecule id="P16157-22"/>
</dbReference>
<dbReference type="CCDS" id="CCDS6121.1">
    <molecule id="P16157-3"/>
</dbReference>
<dbReference type="CCDS" id="CCDS6122.1">
    <molecule id="P16157-17"/>
</dbReference>
<dbReference type="PIR" id="A35049">
    <property type="entry name" value="A35049"/>
</dbReference>
<dbReference type="PIR" id="S08275">
    <property type="entry name" value="SJHUK"/>
</dbReference>
<dbReference type="RefSeq" id="NP_000028.3">
    <molecule id="P16157-3"/>
    <property type="nucleotide sequence ID" value="NM_000037.3"/>
</dbReference>
<dbReference type="RefSeq" id="NP_001135917.1">
    <molecule id="P16157-23"/>
    <property type="nucleotide sequence ID" value="NM_001142445.2"/>
</dbReference>
<dbReference type="RefSeq" id="NP_001135918.1">
    <molecule id="P16157-21"/>
    <property type="nucleotide sequence ID" value="NM_001142446.2"/>
</dbReference>
<dbReference type="RefSeq" id="NP_065208.2">
    <molecule id="P16157-5"/>
    <property type="nucleotide sequence ID" value="NM_020475.3"/>
</dbReference>
<dbReference type="RefSeq" id="NP_065209.2">
    <molecule id="P16157-1"/>
    <property type="nucleotide sequence ID" value="NM_020476.3"/>
</dbReference>
<dbReference type="RefSeq" id="NP_065210.2">
    <molecule id="P16157-4"/>
    <property type="nucleotide sequence ID" value="NM_020477.3"/>
</dbReference>
<dbReference type="RefSeq" id="NP_065211.2">
    <molecule id="P16157-17"/>
    <property type="nucleotide sequence ID" value="NM_020478.5"/>
</dbReference>
<dbReference type="RefSeq" id="NP_065213.2">
    <molecule id="P16157-22"/>
    <property type="nucleotide sequence ID" value="NM_020480.5"/>
</dbReference>
<dbReference type="PDB" id="1N11">
    <property type="method" value="X-ray"/>
    <property type="resolution" value="2.70 A"/>
    <property type="chains" value="A=402-827"/>
</dbReference>
<dbReference type="PDB" id="2YQF">
    <property type="method" value="NMR"/>
    <property type="chains" value="A=1394-1497"/>
</dbReference>
<dbReference type="PDB" id="2YVI">
    <property type="method" value="X-ray"/>
    <property type="resolution" value="1.92 A"/>
    <property type="chains" value="A=1394-1497"/>
</dbReference>
<dbReference type="PDB" id="3F59">
    <property type="method" value="X-ray"/>
    <property type="resolution" value="2.00 A"/>
    <property type="chains" value="A/B/C/D=911-1068"/>
</dbReference>
<dbReference type="PDB" id="3KBT">
    <property type="method" value="X-ray"/>
    <property type="resolution" value="2.75 A"/>
    <property type="chains" value="C/D=911-1068"/>
</dbReference>
<dbReference type="PDB" id="3KBU">
    <property type="method" value="X-ray"/>
    <property type="resolution" value="2.75 A"/>
    <property type="chains" value="C/D=911-1068"/>
</dbReference>
<dbReference type="PDB" id="3UD1">
    <property type="method" value="X-ray"/>
    <property type="resolution" value="2.00 A"/>
    <property type="chains" value="A/B/C=911-1233"/>
</dbReference>
<dbReference type="PDB" id="3UD2">
    <property type="method" value="X-ray"/>
    <property type="resolution" value="2.21 A"/>
    <property type="chains" value="A/B/C=911-1233"/>
</dbReference>
<dbReference type="PDB" id="7TW3">
    <property type="method" value="EM"/>
    <property type="resolution" value="4.40 A"/>
    <property type="chains" value="G=1-1881"/>
</dbReference>
<dbReference type="PDB" id="7TW5">
    <property type="method" value="EM"/>
    <property type="resolution" value="5.70 A"/>
    <property type="chains" value="G/H=1-1881"/>
</dbReference>
<dbReference type="PDB" id="7TW6">
    <property type="method" value="EM"/>
    <property type="resolution" value="5.60 A"/>
    <property type="chains" value="G=1-1881"/>
</dbReference>
<dbReference type="PDB" id="7UZQ">
    <property type="method" value="EM"/>
    <property type="resolution" value="2.17 A"/>
    <property type="chains" value="J=1-201"/>
</dbReference>
<dbReference type="PDB" id="7UZU">
    <property type="method" value="EM"/>
    <property type="resolution" value="2.30 A"/>
    <property type="chains" value="A=1-1881"/>
</dbReference>
<dbReference type="PDB" id="7V0K">
    <property type="method" value="EM"/>
    <property type="resolution" value="2.40 A"/>
    <property type="chains" value="H=1-1881"/>
</dbReference>
<dbReference type="PDB" id="7V0M">
    <property type="method" value="EM"/>
    <property type="resolution" value="2.70 A"/>
    <property type="chains" value="A=1-1881"/>
</dbReference>
<dbReference type="PDB" id="7V0S">
    <property type="method" value="EM"/>
    <property type="resolution" value="2.50 A"/>
    <property type="chains" value="J=1-1881"/>
</dbReference>
<dbReference type="PDB" id="7V0X">
    <property type="method" value="EM"/>
    <property type="resolution" value="3.00 A"/>
    <property type="chains" value="J=1-1881"/>
</dbReference>
<dbReference type="PDB" id="8CS9">
    <property type="method" value="EM"/>
    <property type="resolution" value="2.74 A"/>
    <property type="chains" value="A=1-1881"/>
</dbReference>
<dbReference type="PDB" id="8CSL">
    <property type="method" value="EM"/>
    <property type="resolution" value="25.00 A"/>
    <property type="chains" value="A=1-1881"/>
</dbReference>
<dbReference type="PDB" id="8CSV">
    <property type="method" value="EM"/>
    <property type="resolution" value="2.70 A"/>
    <property type="chains" value="A=1-1881"/>
</dbReference>
<dbReference type="PDB" id="8CTE">
    <property type="method" value="EM"/>
    <property type="resolution" value="2.90 A"/>
    <property type="chains" value="A=1-1881"/>
</dbReference>
<dbReference type="PDBsum" id="1N11"/>
<dbReference type="PDBsum" id="2YQF"/>
<dbReference type="PDBsum" id="2YVI"/>
<dbReference type="PDBsum" id="3F59"/>
<dbReference type="PDBsum" id="3KBT"/>
<dbReference type="PDBsum" id="3KBU"/>
<dbReference type="PDBsum" id="3UD1"/>
<dbReference type="PDBsum" id="3UD2"/>
<dbReference type="PDBsum" id="7TW3"/>
<dbReference type="PDBsum" id="7TW5"/>
<dbReference type="PDBsum" id="7TW6"/>
<dbReference type="PDBsum" id="7UZQ"/>
<dbReference type="PDBsum" id="7UZU"/>
<dbReference type="PDBsum" id="7V0K"/>
<dbReference type="PDBsum" id="7V0M"/>
<dbReference type="PDBsum" id="7V0S"/>
<dbReference type="PDBsum" id="7V0X"/>
<dbReference type="PDBsum" id="8CS9"/>
<dbReference type="PDBsum" id="8CSL"/>
<dbReference type="PDBsum" id="8CSV"/>
<dbReference type="PDBsum" id="8CTE"/>
<dbReference type="BMRB" id="P16157"/>
<dbReference type="EMDB" id="EMD-26149"/>
<dbReference type="EMDB" id="EMD-26151"/>
<dbReference type="EMDB" id="EMD-26153"/>
<dbReference type="EMDB" id="EMD-26916"/>
<dbReference type="EMDB" id="EMD-26918"/>
<dbReference type="EMDB" id="EMD-26943"/>
<dbReference type="EMDB" id="EMD-26944"/>
<dbReference type="EMDB" id="EMD-26949"/>
<dbReference type="EMDB" id="EMD-26952"/>
<dbReference type="EMDB" id="EMD-26960"/>
<dbReference type="EMDB" id="EMD-26965"/>
<dbReference type="EMDB" id="EMD-26972"/>
<dbReference type="EMDB" id="EMD-26988"/>
<dbReference type="SMR" id="P16157"/>
<dbReference type="BioGRID" id="106783">
    <property type="interactions" value="48"/>
</dbReference>
<dbReference type="FunCoup" id="P16157">
    <property type="interactions" value="422"/>
</dbReference>
<dbReference type="IntAct" id="P16157">
    <property type="interactions" value="34"/>
</dbReference>
<dbReference type="STRING" id="9606.ENSP00000265709"/>
<dbReference type="TCDB" id="8.A.28.1.2">
    <property type="family name" value="the ankyrin (ankyrin) family"/>
</dbReference>
<dbReference type="GlyConnect" id="2881">
    <property type="glycosylation" value="1 O-GlcNAc glycan (4 sites)"/>
</dbReference>
<dbReference type="GlyCosmos" id="P16157">
    <property type="glycosylation" value="4 sites, 1 glycan"/>
</dbReference>
<dbReference type="GlyGen" id="P16157">
    <property type="glycosylation" value="5 sites, 1 O-linked glycan (4 sites)"/>
</dbReference>
<dbReference type="iPTMnet" id="P16157"/>
<dbReference type="MetOSite" id="P16157"/>
<dbReference type="PhosphoSitePlus" id="P16157"/>
<dbReference type="BioMuta" id="ANK1"/>
<dbReference type="DMDM" id="116241246"/>
<dbReference type="jPOST" id="P16157"/>
<dbReference type="MassIVE" id="P16157"/>
<dbReference type="PaxDb" id="9606-ENSP00000265709"/>
<dbReference type="PeptideAtlas" id="P16157"/>
<dbReference type="ProteomicsDB" id="15386"/>
<dbReference type="ProteomicsDB" id="53299">
    <molecule id="P16157-1"/>
</dbReference>
<dbReference type="ProteomicsDB" id="53300">
    <molecule id="P16157-10"/>
</dbReference>
<dbReference type="ProteomicsDB" id="53301">
    <molecule id="P16157-11"/>
</dbReference>
<dbReference type="ProteomicsDB" id="53302">
    <molecule id="P16157-12"/>
</dbReference>
<dbReference type="ProteomicsDB" id="53303">
    <molecule id="P16157-13"/>
</dbReference>
<dbReference type="ProteomicsDB" id="53304">
    <molecule id="P16157-14"/>
</dbReference>
<dbReference type="ProteomicsDB" id="53305">
    <molecule id="P16157-15"/>
</dbReference>
<dbReference type="ProteomicsDB" id="53306">
    <molecule id="P16157-16"/>
</dbReference>
<dbReference type="ProteomicsDB" id="53307">
    <molecule id="P16157-17"/>
</dbReference>
<dbReference type="ProteomicsDB" id="53308">
    <molecule id="P16157-18"/>
</dbReference>
<dbReference type="ProteomicsDB" id="53309">
    <molecule id="P16157-19"/>
</dbReference>
<dbReference type="ProteomicsDB" id="53310">
    <molecule id="P16157-2"/>
</dbReference>
<dbReference type="ProteomicsDB" id="53311">
    <molecule id="P16157-20"/>
</dbReference>
<dbReference type="ProteomicsDB" id="53312">
    <molecule id="P16157-21"/>
</dbReference>
<dbReference type="ProteomicsDB" id="53313">
    <molecule id="P16157-3"/>
</dbReference>
<dbReference type="ProteomicsDB" id="53314">
    <molecule id="P16157-4"/>
</dbReference>
<dbReference type="ProteomicsDB" id="53315">
    <molecule id="P16157-5"/>
</dbReference>
<dbReference type="ProteomicsDB" id="53316">
    <molecule id="P16157-6"/>
</dbReference>
<dbReference type="ProteomicsDB" id="53317">
    <molecule id="P16157-7"/>
</dbReference>
<dbReference type="ProteomicsDB" id="53318">
    <molecule id="P16157-8"/>
</dbReference>
<dbReference type="ProteomicsDB" id="53319">
    <molecule id="P16157-9"/>
</dbReference>
<dbReference type="ProteomicsDB" id="62"/>
<dbReference type="ProteomicsDB" id="62447"/>
<dbReference type="Pumba" id="P16157"/>
<dbReference type="ABCD" id="P16157">
    <property type="antibodies" value="3 sequenced antibodies"/>
</dbReference>
<dbReference type="Antibodypedia" id="4229">
    <property type="antibodies" value="436 antibodies from 35 providers"/>
</dbReference>
<dbReference type="DNASU" id="286"/>
<dbReference type="Ensembl" id="ENST00000265709.14">
    <molecule id="P16157-21"/>
    <property type="protein sequence ID" value="ENSP00000265709.8"/>
    <property type="gene ID" value="ENSG00000029534.22"/>
</dbReference>
<dbReference type="Ensembl" id="ENST00000289734.13">
    <molecule id="P16157-3"/>
    <property type="protein sequence ID" value="ENSP00000289734.8"/>
    <property type="gene ID" value="ENSG00000029534.22"/>
</dbReference>
<dbReference type="Ensembl" id="ENST00000314214.12">
    <molecule id="P16157-17"/>
    <property type="protein sequence ID" value="ENSP00000319123.8"/>
    <property type="gene ID" value="ENSG00000029534.22"/>
</dbReference>
<dbReference type="Ensembl" id="ENST00000347528.8">
    <molecule id="P16157-1"/>
    <property type="protein sequence ID" value="ENSP00000339620.4"/>
    <property type="gene ID" value="ENSG00000029534.22"/>
</dbReference>
<dbReference type="Ensembl" id="ENST00000348036.8">
    <molecule id="P16157-22"/>
    <property type="protein sequence ID" value="ENSP00000297744.5"/>
    <property type="gene ID" value="ENSG00000029534.22"/>
</dbReference>
<dbReference type="Ensembl" id="ENST00000522543.6">
    <molecule id="P16157-23"/>
    <property type="protein sequence ID" value="ENSP00000430368.1"/>
    <property type="gene ID" value="ENSG00000029534.22"/>
</dbReference>
<dbReference type="GeneID" id="286"/>
<dbReference type="KEGG" id="hsa:286"/>
<dbReference type="MANE-Select" id="ENST00000289734.13">
    <molecule id="P16157-3"/>
    <property type="protein sequence ID" value="ENSP00000289734.8"/>
    <property type="RefSeq nucleotide sequence ID" value="NM_000037.4"/>
    <property type="RefSeq protein sequence ID" value="NP_000028.3"/>
</dbReference>
<dbReference type="UCSC" id="uc003xoc.4">
    <molecule id="P16157-1"/>
    <property type="organism name" value="human"/>
</dbReference>
<dbReference type="AGR" id="HGNC:492"/>
<dbReference type="CTD" id="286"/>
<dbReference type="DisGeNET" id="286"/>
<dbReference type="GeneCards" id="ANK1"/>
<dbReference type="HGNC" id="HGNC:492">
    <property type="gene designation" value="ANK1"/>
</dbReference>
<dbReference type="HPA" id="ENSG00000029534">
    <property type="expression patterns" value="Group enriched (skeletal muscle, tongue)"/>
</dbReference>
<dbReference type="MalaCards" id="ANK1"/>
<dbReference type="MIM" id="182900">
    <property type="type" value="phenotype"/>
</dbReference>
<dbReference type="MIM" id="612641">
    <property type="type" value="gene"/>
</dbReference>
<dbReference type="neXtProt" id="NX_P16157"/>
<dbReference type="OpenTargets" id="ENSG00000029534"/>
<dbReference type="Orphanet" id="251066">
    <property type="disease" value="8p11.2 deletion syndrome"/>
</dbReference>
<dbReference type="Orphanet" id="822">
    <property type="disease" value="Hereditary spherocytosis"/>
</dbReference>
<dbReference type="PharmGKB" id="PA24798"/>
<dbReference type="VEuPathDB" id="HostDB:ENSG00000029534"/>
<dbReference type="eggNOG" id="KOG4177">
    <property type="taxonomic scope" value="Eukaryota"/>
</dbReference>
<dbReference type="GeneTree" id="ENSGT00940000155760"/>
<dbReference type="HOGENOM" id="CLU_1694857_0_0_1"/>
<dbReference type="InParanoid" id="P16157"/>
<dbReference type="OMA" id="YWSEVAI"/>
<dbReference type="OrthoDB" id="20872at2759"/>
<dbReference type="PAN-GO" id="P16157">
    <property type="GO annotations" value="6 GO annotations based on evolutionary models"/>
</dbReference>
<dbReference type="PhylomeDB" id="P16157"/>
<dbReference type="TreeFam" id="TF351263"/>
<dbReference type="PathwayCommons" id="P16157"/>
<dbReference type="Reactome" id="R-HSA-445095">
    <property type="pathway name" value="Interaction between L1 and Ankyrins"/>
</dbReference>
<dbReference type="Reactome" id="R-HSA-447038">
    <property type="pathway name" value="NrCAM interactions"/>
</dbReference>
<dbReference type="Reactome" id="R-HSA-447041">
    <property type="pathway name" value="CHL1 interactions"/>
</dbReference>
<dbReference type="Reactome" id="R-HSA-447043">
    <property type="pathway name" value="Neurofascin interactions"/>
</dbReference>
<dbReference type="Reactome" id="R-HSA-6807878">
    <property type="pathway name" value="COPI-mediated anterograde transport"/>
</dbReference>
<dbReference type="SignaLink" id="P16157"/>
<dbReference type="SIGNOR" id="P16157"/>
<dbReference type="BioGRID-ORCS" id="286">
    <property type="hits" value="14 hits in 1158 CRISPR screens"/>
</dbReference>
<dbReference type="CD-CODE" id="FB4E32DD">
    <property type="entry name" value="Presynaptic clusters and postsynaptic densities"/>
</dbReference>
<dbReference type="ChiTaRS" id="ANK1">
    <property type="organism name" value="human"/>
</dbReference>
<dbReference type="EvolutionaryTrace" id="P16157"/>
<dbReference type="GeneWiki" id="ANK1"/>
<dbReference type="GenomeRNAi" id="286"/>
<dbReference type="Pharos" id="P16157">
    <property type="development level" value="Tbio"/>
</dbReference>
<dbReference type="PRO" id="PR:P16157"/>
<dbReference type="Proteomes" id="UP000005640">
    <property type="component" value="Chromosome 8"/>
</dbReference>
<dbReference type="RNAct" id="P16157">
    <property type="molecule type" value="protein"/>
</dbReference>
<dbReference type="Bgee" id="ENSG00000029534">
    <property type="expression patterns" value="Expressed in skeletal muscle tissue of rectus abdominis and 162 other cell types or tissues"/>
</dbReference>
<dbReference type="ExpressionAtlas" id="P16157">
    <property type="expression patterns" value="baseline and differential"/>
</dbReference>
<dbReference type="GO" id="GO:0170014">
    <property type="term" value="C:ankyrin-1 complex"/>
    <property type="evidence" value="ECO:0000314"/>
    <property type="project" value="UniProtKB"/>
</dbReference>
<dbReference type="GO" id="GO:0030673">
    <property type="term" value="C:axolemma"/>
    <property type="evidence" value="ECO:0007669"/>
    <property type="project" value="Ensembl"/>
</dbReference>
<dbReference type="GO" id="GO:0016323">
    <property type="term" value="C:basolateral plasma membrane"/>
    <property type="evidence" value="ECO:0000303"/>
    <property type="project" value="UniProtKB"/>
</dbReference>
<dbReference type="GO" id="GO:0009898">
    <property type="term" value="C:cytoplasmic side of plasma membrane"/>
    <property type="evidence" value="ECO:0000314"/>
    <property type="project" value="ARUK-UCL"/>
</dbReference>
<dbReference type="GO" id="GO:0005856">
    <property type="term" value="C:cytoskeleton"/>
    <property type="evidence" value="ECO:0000303"/>
    <property type="project" value="UniProtKB"/>
</dbReference>
<dbReference type="GO" id="GO:0005829">
    <property type="term" value="C:cytosol"/>
    <property type="evidence" value="ECO:0000304"/>
    <property type="project" value="Reactome"/>
</dbReference>
<dbReference type="GO" id="GO:0031430">
    <property type="term" value="C:M band"/>
    <property type="evidence" value="ECO:0007669"/>
    <property type="project" value="UniProtKB-SubCell"/>
</dbReference>
<dbReference type="GO" id="GO:0043005">
    <property type="term" value="C:neuron projection"/>
    <property type="evidence" value="ECO:0000318"/>
    <property type="project" value="GO_Central"/>
</dbReference>
<dbReference type="GO" id="GO:0005886">
    <property type="term" value="C:plasma membrane"/>
    <property type="evidence" value="ECO:0000314"/>
    <property type="project" value="BHF-UCL"/>
</dbReference>
<dbReference type="GO" id="GO:0045211">
    <property type="term" value="C:postsynaptic membrane"/>
    <property type="evidence" value="ECO:0007669"/>
    <property type="project" value="Ensembl"/>
</dbReference>
<dbReference type="GO" id="GO:0042383">
    <property type="term" value="C:sarcolemma"/>
    <property type="evidence" value="ECO:0007669"/>
    <property type="project" value="Ensembl"/>
</dbReference>
<dbReference type="GO" id="GO:0016529">
    <property type="term" value="C:sarcoplasmic reticulum"/>
    <property type="evidence" value="ECO:0007669"/>
    <property type="project" value="UniProtKB-SubCell"/>
</dbReference>
<dbReference type="GO" id="GO:0014731">
    <property type="term" value="C:spectrin-associated cytoskeleton"/>
    <property type="evidence" value="ECO:0000314"/>
    <property type="project" value="BHF-UCL"/>
</dbReference>
<dbReference type="GO" id="GO:0030018">
    <property type="term" value="C:Z disc"/>
    <property type="evidence" value="ECO:0007669"/>
    <property type="project" value="Ensembl"/>
</dbReference>
<dbReference type="GO" id="GO:0051117">
    <property type="term" value="F:ATPase binding"/>
    <property type="evidence" value="ECO:0000353"/>
    <property type="project" value="BHF-UCL"/>
</dbReference>
<dbReference type="GO" id="GO:0008093">
    <property type="term" value="F:cytoskeletal anchor activity"/>
    <property type="evidence" value="ECO:0000314"/>
    <property type="project" value="BHF-UCL"/>
</dbReference>
<dbReference type="GO" id="GO:0019899">
    <property type="term" value="F:enzyme binding"/>
    <property type="evidence" value="ECO:0000353"/>
    <property type="project" value="UniProtKB"/>
</dbReference>
<dbReference type="GO" id="GO:0019903">
    <property type="term" value="F:protein phosphatase binding"/>
    <property type="evidence" value="ECO:0000353"/>
    <property type="project" value="ARUK-UCL"/>
</dbReference>
<dbReference type="GO" id="GO:0030507">
    <property type="term" value="F:spectrin binding"/>
    <property type="evidence" value="ECO:0000314"/>
    <property type="project" value="ARUK-UCL"/>
</dbReference>
<dbReference type="GO" id="GO:0005200">
    <property type="term" value="F:structural constituent of cytoskeleton"/>
    <property type="evidence" value="ECO:0000304"/>
    <property type="project" value="ProtInc"/>
</dbReference>
<dbReference type="GO" id="GO:0005198">
    <property type="term" value="F:structural molecule activity"/>
    <property type="evidence" value="ECO:0000303"/>
    <property type="project" value="UniProtKB"/>
</dbReference>
<dbReference type="GO" id="GO:0044325">
    <property type="term" value="F:transmembrane transporter binding"/>
    <property type="evidence" value="ECO:0000318"/>
    <property type="project" value="GO_Central"/>
</dbReference>
<dbReference type="GO" id="GO:0007010">
    <property type="term" value="P:cytoskeleton organization"/>
    <property type="evidence" value="ECO:0000303"/>
    <property type="project" value="UniProtKB"/>
</dbReference>
<dbReference type="GO" id="GO:0006888">
    <property type="term" value="P:endoplasmic reticulum to Golgi vesicle-mediated transport"/>
    <property type="evidence" value="ECO:0000314"/>
    <property type="project" value="BHF-UCL"/>
</dbReference>
<dbReference type="GO" id="GO:0006887">
    <property type="term" value="P:exocytosis"/>
    <property type="evidence" value="ECO:0000303"/>
    <property type="project" value="UniProtKB"/>
</dbReference>
<dbReference type="GO" id="GO:0045199">
    <property type="term" value="P:maintenance of epithelial cell apical/basal polarity"/>
    <property type="evidence" value="ECO:0000304"/>
    <property type="project" value="UniProtKB"/>
</dbReference>
<dbReference type="GO" id="GO:0010638">
    <property type="term" value="P:positive regulation of organelle organization"/>
    <property type="evidence" value="ECO:0007669"/>
    <property type="project" value="Ensembl"/>
</dbReference>
<dbReference type="GO" id="GO:0072659">
    <property type="term" value="P:protein localization to plasma membrane"/>
    <property type="evidence" value="ECO:0000315"/>
    <property type="project" value="BHF-UCL"/>
</dbReference>
<dbReference type="GO" id="GO:0007165">
    <property type="term" value="P:signal transduction"/>
    <property type="evidence" value="ECO:0007669"/>
    <property type="project" value="InterPro"/>
</dbReference>
<dbReference type="CDD" id="cd08805">
    <property type="entry name" value="Death_ank1"/>
    <property type="match status" value="1"/>
</dbReference>
<dbReference type="FunFam" id="1.10.533.10:FF:000010">
    <property type="entry name" value="Ankyrin 1"/>
    <property type="match status" value="1"/>
</dbReference>
<dbReference type="FunFam" id="1.25.40.20:FF:000003">
    <property type="entry name" value="Ankyrin, isoform B"/>
    <property type="match status" value="1"/>
</dbReference>
<dbReference type="FunFam" id="2.60.40.2660:FF:000002">
    <property type="entry name" value="Ankyrin-1 isoform B"/>
    <property type="match status" value="1"/>
</dbReference>
<dbReference type="FunFam" id="1.25.40.20:FF:000001">
    <property type="entry name" value="Ankyrin-2 isoform 2"/>
    <property type="match status" value="1"/>
</dbReference>
<dbReference type="FunFam" id="1.25.40.20:FF:000002">
    <property type="entry name" value="Ankyrin-2 isoform 2"/>
    <property type="match status" value="1"/>
</dbReference>
<dbReference type="FunFam" id="2.60.220.30:FF:000001">
    <property type="entry name" value="Ankyrin-3 isoform 2"/>
    <property type="match status" value="1"/>
</dbReference>
<dbReference type="FunFam" id="2.60.220.30:FF:000002">
    <property type="entry name" value="Ankyrin-3 isoform 2"/>
    <property type="match status" value="1"/>
</dbReference>
<dbReference type="Gene3D" id="2.60.220.30">
    <property type="match status" value="2"/>
</dbReference>
<dbReference type="Gene3D" id="2.60.40.2660">
    <property type="match status" value="1"/>
</dbReference>
<dbReference type="Gene3D" id="1.25.40.20">
    <property type="entry name" value="Ankyrin repeat-containing domain"/>
    <property type="match status" value="3"/>
</dbReference>
<dbReference type="Gene3D" id="1.10.533.10">
    <property type="entry name" value="Death Domain, Fas"/>
    <property type="match status" value="1"/>
</dbReference>
<dbReference type="InterPro" id="IPR002110">
    <property type="entry name" value="Ankyrin_rpt"/>
</dbReference>
<dbReference type="InterPro" id="IPR036770">
    <property type="entry name" value="Ankyrin_rpt-contain_sf"/>
</dbReference>
<dbReference type="InterPro" id="IPR040745">
    <property type="entry name" value="Ankyrin_UPA"/>
</dbReference>
<dbReference type="InterPro" id="IPR011029">
    <property type="entry name" value="DEATH-like_dom_sf"/>
</dbReference>
<dbReference type="InterPro" id="IPR000488">
    <property type="entry name" value="Death_dom"/>
</dbReference>
<dbReference type="InterPro" id="IPR051165">
    <property type="entry name" value="Multifunctional_ANK_Repeat"/>
</dbReference>
<dbReference type="InterPro" id="IPR000906">
    <property type="entry name" value="ZU5_dom"/>
</dbReference>
<dbReference type="PANTHER" id="PTHR24123:SF71">
    <property type="entry name" value="ANKYRIN 1, ERYTHROCYTIC A ISOFORM X1"/>
    <property type="match status" value="1"/>
</dbReference>
<dbReference type="PANTHER" id="PTHR24123">
    <property type="entry name" value="ANKYRIN REPEAT-CONTAINING"/>
    <property type="match status" value="1"/>
</dbReference>
<dbReference type="Pfam" id="PF00023">
    <property type="entry name" value="Ank"/>
    <property type="match status" value="5"/>
</dbReference>
<dbReference type="Pfam" id="PF12796">
    <property type="entry name" value="Ank_2"/>
    <property type="match status" value="7"/>
</dbReference>
<dbReference type="Pfam" id="PF13606">
    <property type="entry name" value="Ank_3"/>
    <property type="match status" value="1"/>
</dbReference>
<dbReference type="Pfam" id="PF00531">
    <property type="entry name" value="Death"/>
    <property type="match status" value="1"/>
</dbReference>
<dbReference type="Pfam" id="PF17809">
    <property type="entry name" value="UPA_2"/>
    <property type="match status" value="1"/>
</dbReference>
<dbReference type="Pfam" id="PF00791">
    <property type="entry name" value="ZU5"/>
    <property type="match status" value="1"/>
</dbReference>
<dbReference type="PRINTS" id="PR01415">
    <property type="entry name" value="ANKYRIN"/>
</dbReference>
<dbReference type="SMART" id="SM00248">
    <property type="entry name" value="ANK"/>
    <property type="match status" value="23"/>
</dbReference>
<dbReference type="SMART" id="SM00005">
    <property type="entry name" value="DEATH"/>
    <property type="match status" value="1"/>
</dbReference>
<dbReference type="SMART" id="SM00218">
    <property type="entry name" value="ZU5"/>
    <property type="match status" value="1"/>
</dbReference>
<dbReference type="SUPFAM" id="SSF48403">
    <property type="entry name" value="Ankyrin repeat"/>
    <property type="match status" value="2"/>
</dbReference>
<dbReference type="SUPFAM" id="SSF47986">
    <property type="entry name" value="DEATH domain"/>
    <property type="match status" value="1"/>
</dbReference>
<dbReference type="PROSITE" id="PS50297">
    <property type="entry name" value="ANK_REP_REGION"/>
    <property type="match status" value="1"/>
</dbReference>
<dbReference type="PROSITE" id="PS50088">
    <property type="entry name" value="ANK_REPEAT"/>
    <property type="match status" value="20"/>
</dbReference>
<dbReference type="PROSITE" id="PS50017">
    <property type="entry name" value="DEATH_DOMAIN"/>
    <property type="match status" value="1"/>
</dbReference>
<dbReference type="PROSITE" id="PS51145">
    <property type="entry name" value="ZU5"/>
    <property type="match status" value="2"/>
</dbReference>
<gene>
    <name evidence="28" type="primary">ANK1</name>
    <name type="synonym">ANK</name>
</gene>
<feature type="chain" id="PRO_0000066883" description="Ankyrin-1">
    <location>
        <begin position="1"/>
        <end position="1881"/>
    </location>
</feature>
<feature type="repeat" description="ANK 1">
    <location>
        <begin position="44"/>
        <end position="73"/>
    </location>
</feature>
<feature type="repeat" description="ANK 2">
    <location>
        <begin position="77"/>
        <end position="106"/>
    </location>
</feature>
<feature type="repeat" description="ANK 3">
    <location>
        <begin position="110"/>
        <end position="139"/>
    </location>
</feature>
<feature type="repeat" description="ANK 4">
    <location>
        <begin position="143"/>
        <end position="172"/>
    </location>
</feature>
<feature type="repeat" description="ANK 5">
    <location>
        <begin position="174"/>
        <end position="201"/>
    </location>
</feature>
<feature type="repeat" description="ANK 6">
    <location>
        <begin position="205"/>
        <end position="234"/>
    </location>
</feature>
<feature type="repeat" description="ANK 7">
    <location>
        <begin position="238"/>
        <end position="267"/>
    </location>
</feature>
<feature type="repeat" description="ANK 8">
    <location>
        <begin position="271"/>
        <end position="300"/>
    </location>
</feature>
<feature type="repeat" description="ANK 9">
    <location>
        <begin position="304"/>
        <end position="333"/>
    </location>
</feature>
<feature type="repeat" description="ANK 10">
    <location>
        <begin position="337"/>
        <end position="366"/>
    </location>
</feature>
<feature type="repeat" description="ANK 11">
    <location>
        <begin position="370"/>
        <end position="399"/>
    </location>
</feature>
<feature type="repeat" description="ANK 12">
    <location>
        <begin position="403"/>
        <end position="432"/>
    </location>
</feature>
<feature type="repeat" description="ANK 13">
    <location>
        <begin position="436"/>
        <end position="465"/>
    </location>
</feature>
<feature type="repeat" description="ANK 14">
    <location>
        <begin position="469"/>
        <end position="498"/>
    </location>
</feature>
<feature type="repeat" description="ANK 15">
    <location>
        <begin position="502"/>
        <end position="531"/>
    </location>
</feature>
<feature type="repeat" description="ANK 16">
    <location>
        <begin position="535"/>
        <end position="564"/>
    </location>
</feature>
<feature type="repeat" description="ANK 17">
    <location>
        <begin position="568"/>
        <end position="597"/>
    </location>
</feature>
<feature type="repeat" description="ANK 18">
    <location>
        <begin position="601"/>
        <end position="630"/>
    </location>
</feature>
<feature type="repeat" description="ANK 19">
    <location>
        <begin position="634"/>
        <end position="663"/>
    </location>
</feature>
<feature type="repeat" description="ANK 20">
    <location>
        <begin position="667"/>
        <end position="696"/>
    </location>
</feature>
<feature type="repeat" description="ANK 21">
    <location>
        <begin position="700"/>
        <end position="729"/>
    </location>
</feature>
<feature type="repeat" description="ANK 22">
    <location>
        <begin position="733"/>
        <end position="762"/>
    </location>
</feature>
<feature type="repeat" description="ANK 23">
    <location>
        <begin position="766"/>
        <end position="795"/>
    </location>
</feature>
<feature type="domain" description="ZU5 1" evidence="4">
    <location>
        <begin position="913"/>
        <end position="1068"/>
    </location>
</feature>
<feature type="domain" description="ZU5 2" evidence="4">
    <location>
        <begin position="1070"/>
        <end position="1216"/>
    </location>
</feature>
<feature type="domain" description="Death" evidence="3">
    <location>
        <begin position="1403"/>
        <end position="1487"/>
    </location>
</feature>
<feature type="region of interest" description="89 kDa domain">
    <location>
        <begin position="1"/>
        <end position="827"/>
    </location>
</feature>
<feature type="region of interest" description="Disordered" evidence="5">
    <location>
        <begin position="875"/>
        <end position="904"/>
    </location>
</feature>
<feature type="region of interest" description="UPA domain" evidence="1">
    <location>
        <begin position="1234"/>
        <end position="1362"/>
    </location>
</feature>
<feature type="region of interest" description="55 kDa regulatory domain">
    <location>
        <begin position="1383"/>
        <end position="1881"/>
    </location>
</feature>
<feature type="region of interest" description="Disordered" evidence="5">
    <location>
        <begin position="1486"/>
        <end position="1510"/>
    </location>
</feature>
<feature type="region of interest" description="Disordered" evidence="5">
    <location>
        <begin position="1583"/>
        <end position="1613"/>
    </location>
</feature>
<feature type="region of interest" description="Disordered" evidence="5">
    <location>
        <begin position="1637"/>
        <end position="1703"/>
    </location>
</feature>
<feature type="region of interest" description="Disordered" evidence="5">
    <location>
        <begin position="1718"/>
        <end position="1791"/>
    </location>
</feature>
<feature type="region of interest" description="Disordered" evidence="5">
    <location>
        <begin position="1840"/>
        <end position="1859"/>
    </location>
</feature>
<feature type="compositionally biased region" description="Polar residues" evidence="5">
    <location>
        <begin position="890"/>
        <end position="904"/>
    </location>
</feature>
<feature type="compositionally biased region" description="Basic and acidic residues" evidence="5">
    <location>
        <begin position="1493"/>
        <end position="1504"/>
    </location>
</feature>
<feature type="compositionally biased region" description="Basic and acidic residues" evidence="5">
    <location>
        <begin position="1588"/>
        <end position="1612"/>
    </location>
</feature>
<feature type="compositionally biased region" description="Basic and acidic residues" evidence="5">
    <location>
        <begin position="1642"/>
        <end position="1658"/>
    </location>
</feature>
<feature type="compositionally biased region" description="Polar residues" evidence="5">
    <location>
        <begin position="1683"/>
        <end position="1694"/>
    </location>
</feature>
<feature type="compositionally biased region" description="Polar residues" evidence="5">
    <location>
        <begin position="1718"/>
        <end position="1739"/>
    </location>
</feature>
<feature type="compositionally biased region" description="Polar residues" evidence="5">
    <location>
        <begin position="1758"/>
        <end position="1771"/>
    </location>
</feature>
<feature type="compositionally biased region" description="Basic and acidic residues" evidence="5">
    <location>
        <begin position="1772"/>
        <end position="1781"/>
    </location>
</feature>
<feature type="modified residue" description="(3S)-3-hydroxyasparagine; by HIF1AN; partial" evidence="12">
    <location>
        <position position="105"/>
    </location>
</feature>
<feature type="modified residue" description="(3S)-3-hydroxyasparagine; by HIF1AN; partial" evidence="12">
    <location>
        <position position="233"/>
    </location>
</feature>
<feature type="modified residue" description="Phosphoserine" evidence="42">
    <location>
        <position position="429"/>
    </location>
</feature>
<feature type="modified residue" description="(3S)-3-hydroxyasparagine; by HIF1AN; partial" evidence="12">
    <location>
        <position position="431"/>
    </location>
</feature>
<feature type="modified residue" description="(3S)-3-hydroxyasparagine; by HIF1AN; partial" evidence="12">
    <location>
        <position position="464"/>
    </location>
</feature>
<feature type="modified residue" description="(3S)-3-hydroxyasparagine; by HIF1AN; partial" evidence="12">
    <location>
        <position position="629"/>
    </location>
</feature>
<feature type="modified residue" description="(3S)-3-hydroxyasparagine; by HIF1AN; partial" evidence="12">
    <location>
        <position position="662"/>
    </location>
</feature>
<feature type="modified residue" description="(3S)-3-hydroxyaspartate; by HIF1AN; partial" evidence="12">
    <location>
        <position position="695"/>
    </location>
</feature>
<feature type="modified residue" description="(3S)-3-hydroxyasparagine; by HIF1AN; partial" evidence="12">
    <location>
        <position position="728"/>
    </location>
</feature>
<feature type="modified residue" description="Phosphoserine" evidence="42">
    <location>
        <position position="759"/>
    </location>
</feature>
<feature type="modified residue" description="(3S)-3-hydroxyasparagine; by HIF1AN; partial" evidence="12">
    <location>
        <position position="761"/>
    </location>
</feature>
<feature type="modified residue" description="Phosphoserine" evidence="42 43">
    <location>
        <position position="781"/>
    </location>
</feature>
<feature type="modified residue" description="Phosphoserine" evidence="43">
    <location>
        <position position="817"/>
    </location>
</feature>
<feature type="modified residue" description="Phosphoserine" evidence="43">
    <location>
        <position position="834"/>
    </location>
</feature>
<feature type="modified residue" description="Phosphoserine" evidence="42 43">
    <location>
        <position position="856"/>
    </location>
</feature>
<feature type="modified residue" description="Phosphothreonine" evidence="2">
    <location>
        <position position="961"/>
    </location>
</feature>
<feature type="modified residue" description="Phosphotyrosine" evidence="2">
    <location>
        <position position="1073"/>
    </location>
</feature>
<feature type="modified residue" description="Phosphoserine" evidence="2">
    <location>
        <position position="1082"/>
    </location>
</feature>
<feature type="modified residue" description="Phosphothreonine" evidence="42">
    <location>
        <position position="1378"/>
    </location>
</feature>
<feature type="modified residue" description="Phosphothreonine" evidence="42">
    <location>
        <position position="1380"/>
    </location>
</feature>
<feature type="modified residue" description="Phosphoserine" evidence="2">
    <location>
        <position position="1390"/>
    </location>
</feature>
<feature type="modified residue" description="Phosphoserine" evidence="2">
    <location>
        <position position="1392"/>
    </location>
</feature>
<feature type="modified residue" description="Phosphoserine" evidence="42">
    <location>
        <position position="1396"/>
    </location>
</feature>
<feature type="modified residue" description="Phosphothreonine" evidence="2">
    <location>
        <position position="1400"/>
    </location>
</feature>
<feature type="modified residue" description="Phosphoserine" evidence="43">
    <location>
        <position position="1428"/>
    </location>
</feature>
<feature type="modified residue" description="Phosphoserine" evidence="42">
    <location>
        <position position="1486"/>
    </location>
</feature>
<feature type="modified residue" description="Phosphoserine" evidence="43">
    <location>
        <position position="1523"/>
    </location>
</feature>
<feature type="modified residue" description="Phosphoserine" evidence="43">
    <location>
        <position position="1533"/>
    </location>
</feature>
<feature type="modified residue" description="Phosphoserine" evidence="2">
    <location>
        <position position="1617"/>
    </location>
</feature>
<feature type="modified residue" description="Phosphoserine" evidence="42">
    <location>
        <position position="1666"/>
    </location>
</feature>
<feature type="modified residue" description="Phosphoserine" evidence="42">
    <location>
        <position position="1671"/>
    </location>
</feature>
<feature type="modified residue" description="Phosphoserine" evidence="42">
    <location>
        <position position="1686"/>
    </location>
</feature>
<feature type="modified residue" description="Phosphoserine" evidence="42">
    <location>
        <position position="1690"/>
    </location>
</feature>
<feature type="modified residue" description="Phosphoserine" evidence="42">
    <location>
        <position position="1696"/>
    </location>
</feature>
<feature type="splice variant" id="VSP_018440" description="In isoform Mu17, isoform Mu18, isoform Mu19, isoform Mu20, isoform 22 and isoform 23." evidence="22 25">
    <location>
        <begin position="1"/>
        <end position="1725"/>
    </location>
</feature>
<feature type="splice variant" id="VSP_018439" description="In isoform Br21." evidence="26">
    <original>MPYSVGFRE</original>
    <variation>MAQAAKQLKKIKDIEAQALQEQKEKEESNRKRRNRSRDRKKK</variation>
    <location>
        <begin position="1"/>
        <end position="9"/>
    </location>
</feature>
<feature type="splice variant" id="VSP_018441" description="In isoform Br21." evidence="26">
    <original>E</original>
    <variation>EGTAHITIM</variation>
    <location>
        <position position="820"/>
    </location>
</feature>
<feature type="splice variant" id="VSP_000264" description="In isoform Er16." evidence="23">
    <location>
        <begin position="1513"/>
        <end position="1874"/>
    </location>
</feature>
<feature type="splice variant" id="VSP_018442" description="In isoform Er2, isoform Er4, isoform Er6, isoform Er8, isoform Er10, isoform Er12 and isoform Er14." evidence="24">
    <location>
        <begin position="1514"/>
        <end position="1675"/>
    </location>
</feature>
<feature type="splice variant" id="VSP_018443" description="In isoform Mu17, isoform Mu18, isoform Mu19, isoform 22 and isoform 23." evidence="22 25">
    <original>TQGPHSFQGTSTMTEGLEPGGSQEYEKVLVSVSEHTWTEQPEAESSQADRDRRQQGQEEQVQEAKNTFTQVVQ</original>
    <variation>MWTFVTQLLVTLVLLSFFLVSCQNVMHIVRGSLCFVLKHIHQELDKELGESEGLSDDEETISTRVVRRRVFLK</variation>
    <location>
        <begin position="1726"/>
        <end position="1798"/>
    </location>
</feature>
<feature type="splice variant" id="VSP_018444" description="In isoform Mu20." evidence="25">
    <original>TQGPHSFQGTSTMTEGLEPGGSQEYEKVLVSVSEHTWTEQPEAESSQADRDRRQQGQEEQVQEAKNTFTQVVQ</original>
    <variation>MWTFVTQLLVTLVLLSFFLVSCQNVMHIVRGSLCFVLKHIHQ</variation>
    <location>
        <begin position="1726"/>
        <end position="1798"/>
    </location>
</feature>
<feature type="splice variant" id="VSP_018446" description="In isoform Mu20." evidence="25">
    <original>GNEFQNIPGEQVTEEQFTDEQGNIVTKKIIRKVVRQIDLSSADAAQEHEEVTVEGPLEDPSELEVDIDYFMKHSKDHTSTPNP</original>
    <variation>VELRGSGLQPDLIEGRKGAQIVKRASLKRGKQ</variation>
    <location>
        <begin position="1799"/>
        <end position="1881"/>
    </location>
</feature>
<feature type="splice variant" id="VSP_018445" description="In isoform Er9, isoform Er10 and isoform Mu19." evidence="25">
    <location>
        <begin position="1799"/>
        <end position="1873"/>
    </location>
</feature>
<feature type="splice variant" id="VSP_045439" description="In isoform 22." evidence="22">
    <location>
        <begin position="1826"/>
        <end position="1872"/>
    </location>
</feature>
<feature type="splice variant" id="VSP_018448" description="In isoform Er15 and isoform Mu18." evidence="25">
    <original>IIRKVVRQIDLSSADAAQEHEEVTVEGPLEDPSELEVDIDYFMKHSKDHTSTPNP</original>
    <variation>VELRGSGLQPDLIEGRKGAQIVKRASLKRGKQ</variation>
    <location>
        <begin position="1827"/>
        <end position="1881"/>
    </location>
</feature>
<feature type="splice variant" id="VSP_018447" description="In isoform Er7 and isoform Er8." evidence="27">
    <location>
        <begin position="1827"/>
        <end position="1873"/>
    </location>
</feature>
<feature type="splice variant" id="VSP_018449" description="In isoform Er3, isoform Er4 and isoform Br21." evidence="26">
    <location>
        <begin position="1849"/>
        <end position="1873"/>
    </location>
</feature>
<feature type="splice variant" id="VSP_000266" description="In isoform Er5, isoform Er6 and isoform Mu17." evidence="22 23 25">
    <original>TVEGPLEDPSELEVDIDYFMKHSKDHTSTPNP</original>
    <variation>ELRGSGLQPDLIEGRKGAQIVKRASLKRGKQ</variation>
    <location>
        <begin position="1850"/>
        <end position="1881"/>
    </location>
</feature>
<feature type="splice variant" id="VSP_018450" description="In isoform Er11 and isoform Er12." evidence="27">
    <original>DHTSTPNP</original>
    <variation>VELRGSGLQPDLIEGRKGAQIVKRASLKRGKQ</variation>
    <location>
        <begin position="1874"/>
        <end position="1881"/>
    </location>
</feature>
<feature type="splice variant" id="VSP_018451" description="In isoform Er13 and isoform Er14." evidence="27">
    <original>DHTSTPNP</original>
    <variation>VLRRPRPWGTQRHHCCLALPGRLHDTSLHSPLYELSLQSLFSLVGSVSAPPCRSFRSSACVLPVFAICPAFCLCCCLQVELRGSGLQPDLIEGRKGAQIVKRASLKRGKQ</variation>
    <location>
        <begin position="1874"/>
        <end position="1881"/>
    </location>
</feature>
<feature type="splice variant" id="VSP_000265" description="In isoform Er16." evidence="23">
    <original>H</original>
    <variation>D</variation>
    <location>
        <position position="1875"/>
    </location>
</feature>
<feature type="sequence variant" id="VAR_000595">
    <original>R</original>
    <variation>T</variation>
    <location>
        <position position="21"/>
    </location>
</feature>
<feature type="sequence variant" id="VAR_054991" description="In SPH1." evidence="6">
    <original>L</original>
    <variation>R</variation>
    <location>
        <position position="276"/>
    </location>
</feature>
<feature type="sequence variant" id="VAR_035605" description="In a breast cancer sample; somatic mutation." evidence="11">
    <original>D</original>
    <variation>H</variation>
    <location>
        <position position="332"/>
    </location>
</feature>
<feature type="sequence variant" id="VAR_000596" description="In SPH1; dbSNP:rs140085544." evidence="18">
    <original>V</original>
    <variation>I</variation>
    <location>
        <position position="463"/>
    </location>
</feature>
<feature type="sequence variant" id="VAR_000597" description="In Brueggen; dbSNP:rs2304877.">
    <original>R</original>
    <variation>H</variation>
    <location>
        <position position="619"/>
    </location>
</feature>
<feature type="sequence variant" id="VAR_028769" description="In dbSNP:rs11778936.">
    <original>L</original>
    <variation>I</variation>
    <location>
        <position position="733"/>
    </location>
</feature>
<feature type="sequence variant" id="VAR_000598" evidence="13">
    <original>V</original>
    <variation>A</variation>
    <location>
        <position position="750"/>
    </location>
</feature>
<feature type="sequence variant" id="VAR_061012" description="In dbSNP:rs34523608.">
    <original>R</original>
    <variation>Q</variation>
    <location>
        <position position="832"/>
    </location>
</feature>
<feature type="sequence variant" id="VAR_000599">
    <original>D</original>
    <variation>E</variation>
    <location>
        <position position="845"/>
    </location>
</feature>
<feature type="sequence variant" id="VAR_026411" description="In dbSNP:rs758454168." evidence="19">
    <original>V</original>
    <variation>L</variation>
    <location>
        <position position="991"/>
    </location>
</feature>
<feature type="sequence variant" id="VAR_054992" description="In SPH1." evidence="6">
    <original>I</original>
    <variation>T</variation>
    <location>
        <position position="1054"/>
    </location>
</feature>
<feature type="sequence variant" id="VAR_048263" description="In dbSNP:rs35213384." evidence="10 13 19 21">
    <original>T</original>
    <variation>I</variation>
    <location>
        <position position="1075"/>
    </location>
</feature>
<feature type="sequence variant" id="VAR_028770" description="In dbSNP:rs504465.">
    <original>A</original>
    <variation>P</variation>
    <location>
        <position position="1126"/>
    </location>
</feature>
<feature type="sequence variant" id="VAR_028771" description="In dbSNP:rs486770.">
    <original>T</original>
    <variation>P</variation>
    <location>
        <position position="1192"/>
    </location>
</feature>
<feature type="sequence variant" id="VAR_000601" description="In dbSNP:rs2150589462." evidence="14">
    <original>E</original>
    <variation>D</variation>
    <location>
        <position position="1286"/>
    </location>
</feature>
<feature type="sequence variant" id="VAR_028772" description="In dbSNP:rs10093583.">
    <original>M</original>
    <variation>V</variation>
    <location>
        <position position="1325"/>
    </location>
</feature>
<feature type="sequence variant" id="VAR_000600">
    <original>S</original>
    <variation>T</variation>
    <location>
        <position position="1392"/>
    </location>
</feature>
<feature type="sequence variant" id="VAR_028773" description="In dbSNP:rs1060130." evidence="10">
    <original>V</original>
    <variation>I</variation>
    <location>
        <position position="1546"/>
    </location>
</feature>
<feature type="sequence variant" id="VAR_000602" description="In Duesseldorf; dbSNP:rs1457291305.">
    <original>D</original>
    <variation>N</variation>
    <location>
        <position position="1592"/>
    </location>
</feature>
<feature type="mutagenesis site" description="Abolishes interaction with OBSCN (in isoform Mu17)." evidence="9">
    <original>T</original>
    <variation>P</variation>
    <location>
        <position position="1824"/>
    </location>
</feature>
<feature type="mutagenesis site" description="Abolishes interaction with OBSCN (in isoform Mu17)." evidence="9">
    <original>K</original>
    <variation>E</variation>
    <location>
        <position position="1826"/>
    </location>
</feature>
<feature type="mutagenesis site" description="Abolishes interaction with OBSCN (in isoform Mu17)." evidence="9">
    <original>R</original>
    <variation>G</variation>
    <location>
        <position position="1829"/>
    </location>
</feature>
<feature type="mutagenesis site" description="Abolishes interaction with OBSCN (in isoform Mu17)." evidence="9">
    <original>K</original>
    <variation>E</variation>
    <location>
        <position position="1830"/>
    </location>
</feature>
<feature type="sequence conflict" description="In Ref. 2; AAA51732." evidence="27" ref="2">
    <original>A</original>
    <variation>S</variation>
    <location>
        <position position="230"/>
    </location>
</feature>
<feature type="sequence conflict" description="In Ref. 3; AAB47805." evidence="27" ref="3">
    <original>K</original>
    <variation>L</variation>
    <location>
        <position position="801"/>
    </location>
</feature>
<feature type="sequence conflict" description="In Ref. 1; AA sequence." evidence="27" ref="1">
    <original>D</original>
    <variation>R</variation>
    <location>
        <position position="845"/>
    </location>
</feature>
<feature type="sequence conflict" description="In Ref. 3; AAB47805." evidence="27" ref="3">
    <original>I</original>
    <variation>T</variation>
    <location>
        <position position="902"/>
    </location>
</feature>
<feature type="helix" evidence="51">
    <location>
        <begin position="12"/>
        <end position="22"/>
    </location>
</feature>
<feature type="helix" evidence="51">
    <location>
        <begin position="25"/>
        <end position="33"/>
    </location>
</feature>
<feature type="helix" evidence="51">
    <location>
        <begin position="48"/>
        <end position="55"/>
    </location>
</feature>
<feature type="helix" evidence="51">
    <location>
        <begin position="58"/>
        <end position="66"/>
    </location>
</feature>
<feature type="helix" evidence="51">
    <location>
        <begin position="81"/>
        <end position="88"/>
    </location>
</feature>
<feature type="helix" evidence="51">
    <location>
        <begin position="91"/>
        <end position="99"/>
    </location>
</feature>
<feature type="helix" evidence="51">
    <location>
        <begin position="114"/>
        <end position="120"/>
    </location>
</feature>
<feature type="helix" evidence="51">
    <location>
        <begin position="124"/>
        <end position="132"/>
    </location>
</feature>
<feature type="helix" evidence="51">
    <location>
        <begin position="147"/>
        <end position="153"/>
    </location>
</feature>
<feature type="helix" evidence="51">
    <location>
        <begin position="157"/>
        <end position="166"/>
    </location>
</feature>
<feature type="helix" evidence="52">
    <location>
        <begin position="176"/>
        <end position="182"/>
    </location>
</feature>
<feature type="helix" evidence="52">
    <location>
        <begin position="186"/>
        <end position="195"/>
    </location>
</feature>
<feature type="helix" evidence="52">
    <location>
        <begin position="209"/>
        <end position="216"/>
    </location>
</feature>
<feature type="helix" evidence="52">
    <location>
        <begin position="219"/>
        <end position="227"/>
    </location>
</feature>
<feature type="helix" evidence="52">
    <location>
        <begin position="242"/>
        <end position="249"/>
    </location>
</feature>
<feature type="helix" evidence="52">
    <location>
        <begin position="252"/>
        <end position="260"/>
    </location>
</feature>
<feature type="helix" evidence="52">
    <location>
        <begin position="275"/>
        <end position="281"/>
    </location>
</feature>
<feature type="helix" evidence="52">
    <location>
        <begin position="285"/>
        <end position="293"/>
    </location>
</feature>
<feature type="helix" evidence="52">
    <location>
        <begin position="308"/>
        <end position="314"/>
    </location>
</feature>
<feature type="helix" evidence="52">
    <location>
        <begin position="318"/>
        <end position="326"/>
    </location>
</feature>
<feature type="helix" evidence="52">
    <location>
        <begin position="341"/>
        <end position="348"/>
    </location>
</feature>
<feature type="helix" evidence="52">
    <location>
        <begin position="351"/>
        <end position="359"/>
    </location>
</feature>
<feature type="helix" evidence="52">
    <location>
        <begin position="374"/>
        <end position="380"/>
    </location>
</feature>
<feature type="helix" evidence="52">
    <location>
        <begin position="384"/>
        <end position="392"/>
    </location>
</feature>
<feature type="helix" evidence="52">
    <location>
        <begin position="407"/>
        <end position="414"/>
    </location>
</feature>
<feature type="helix" evidence="52">
    <location>
        <begin position="417"/>
        <end position="425"/>
    </location>
</feature>
<feature type="strand" evidence="52">
    <location>
        <begin position="435"/>
        <end position="437"/>
    </location>
</feature>
<feature type="helix" evidence="52">
    <location>
        <begin position="440"/>
        <end position="447"/>
    </location>
</feature>
<feature type="helix" evidence="52">
    <location>
        <begin position="450"/>
        <end position="458"/>
    </location>
</feature>
<feature type="helix" evidence="44">
    <location>
        <begin position="473"/>
        <end position="480"/>
    </location>
</feature>
<feature type="helix" evidence="44">
    <location>
        <begin position="483"/>
        <end position="492"/>
    </location>
</feature>
<feature type="helix" evidence="44">
    <location>
        <begin position="506"/>
        <end position="513"/>
    </location>
</feature>
<feature type="helix" evidence="44">
    <location>
        <begin position="516"/>
        <end position="524"/>
    </location>
</feature>
<feature type="helix" evidence="44">
    <location>
        <begin position="539"/>
        <end position="545"/>
    </location>
</feature>
<feature type="helix" evidence="44">
    <location>
        <begin position="549"/>
        <end position="557"/>
    </location>
</feature>
<feature type="helix" evidence="44">
    <location>
        <begin position="572"/>
        <end position="578"/>
    </location>
</feature>
<feature type="helix" evidence="44">
    <location>
        <begin position="582"/>
        <end position="588"/>
    </location>
</feature>
<feature type="helix" evidence="44">
    <location>
        <begin position="589"/>
        <end position="591"/>
    </location>
</feature>
<feature type="helix" evidence="44">
    <location>
        <begin position="605"/>
        <end position="611"/>
    </location>
</feature>
<feature type="helix" evidence="44">
    <location>
        <begin position="615"/>
        <end position="623"/>
    </location>
</feature>
<feature type="helix" evidence="44">
    <location>
        <begin position="638"/>
        <end position="644"/>
    </location>
</feature>
<feature type="helix" evidence="44">
    <location>
        <begin position="648"/>
        <end position="655"/>
    </location>
</feature>
<feature type="turn" evidence="44">
    <location>
        <begin position="656"/>
        <end position="658"/>
    </location>
</feature>
<feature type="helix" evidence="44">
    <location>
        <begin position="671"/>
        <end position="678"/>
    </location>
</feature>
<feature type="helix" evidence="44">
    <location>
        <begin position="681"/>
        <end position="690"/>
    </location>
</feature>
<feature type="helix" evidence="44">
    <location>
        <begin position="704"/>
        <end position="710"/>
    </location>
</feature>
<feature type="helix" evidence="44">
    <location>
        <begin position="715"/>
        <end position="722"/>
    </location>
</feature>
<feature type="helix" evidence="44">
    <location>
        <begin position="737"/>
        <end position="743"/>
    </location>
</feature>
<feature type="helix" evidence="44">
    <location>
        <begin position="747"/>
        <end position="755"/>
    </location>
</feature>
<feature type="strand" evidence="44">
    <location>
        <begin position="765"/>
        <end position="767"/>
    </location>
</feature>
<feature type="helix" evidence="44">
    <location>
        <begin position="770"/>
        <end position="776"/>
    </location>
</feature>
<feature type="helix" evidence="44">
    <location>
        <begin position="780"/>
        <end position="789"/>
    </location>
</feature>
<feature type="strand" evidence="46">
    <location>
        <begin position="914"/>
        <end position="919"/>
    </location>
</feature>
<feature type="strand" evidence="46">
    <location>
        <begin position="924"/>
        <end position="927"/>
    </location>
</feature>
<feature type="turn" evidence="49">
    <location>
        <begin position="930"/>
        <end position="932"/>
    </location>
</feature>
<feature type="strand" evidence="46">
    <location>
        <begin position="935"/>
        <end position="938"/>
    </location>
</feature>
<feature type="strand" evidence="47">
    <location>
        <begin position="942"/>
        <end position="945"/>
    </location>
</feature>
<feature type="strand" evidence="46">
    <location>
        <begin position="947"/>
        <end position="954"/>
    </location>
</feature>
<feature type="helix" evidence="46">
    <location>
        <begin position="956"/>
        <end position="958"/>
    </location>
</feature>
<feature type="strand" evidence="48">
    <location>
        <begin position="959"/>
        <end position="961"/>
    </location>
</feature>
<feature type="strand" evidence="47">
    <location>
        <begin position="970"/>
        <end position="973"/>
    </location>
</feature>
<feature type="strand" evidence="46">
    <location>
        <begin position="975"/>
        <end position="980"/>
    </location>
</feature>
<feature type="strand" evidence="46">
    <location>
        <begin position="984"/>
        <end position="994"/>
    </location>
</feature>
<feature type="strand" evidence="47">
    <location>
        <begin position="1000"/>
        <end position="1003"/>
    </location>
</feature>
<feature type="strand" evidence="46">
    <location>
        <begin position="1006"/>
        <end position="1015"/>
    </location>
</feature>
<feature type="strand" evidence="47">
    <location>
        <begin position="1018"/>
        <end position="1020"/>
    </location>
</feature>
<feature type="helix" evidence="46">
    <location>
        <begin position="1026"/>
        <end position="1028"/>
    </location>
</feature>
<feature type="helix" evidence="46">
    <location>
        <begin position="1029"/>
        <end position="1033"/>
    </location>
</feature>
<feature type="helix" evidence="46">
    <location>
        <begin position="1043"/>
        <end position="1049"/>
    </location>
</feature>
<feature type="strand" evidence="46">
    <location>
        <begin position="1051"/>
        <end position="1058"/>
    </location>
</feature>
<feature type="strand" evidence="46">
    <location>
        <begin position="1061"/>
        <end position="1067"/>
    </location>
</feature>
<feature type="strand" evidence="49">
    <location>
        <begin position="1074"/>
        <end position="1076"/>
    </location>
</feature>
<feature type="strand" evidence="49">
    <location>
        <begin position="1081"/>
        <end position="1084"/>
    </location>
</feature>
<feature type="strand" evidence="49">
    <location>
        <begin position="1092"/>
        <end position="1095"/>
    </location>
</feature>
<feature type="strand" evidence="49">
    <location>
        <begin position="1099"/>
        <end position="1102"/>
    </location>
</feature>
<feature type="strand" evidence="49">
    <location>
        <begin position="1104"/>
        <end position="1111"/>
    </location>
</feature>
<feature type="helix" evidence="49">
    <location>
        <begin position="1115"/>
        <end position="1122"/>
    </location>
</feature>
<feature type="strand" evidence="49">
    <location>
        <begin position="1131"/>
        <end position="1138"/>
    </location>
</feature>
<feature type="strand" evidence="49">
    <location>
        <begin position="1140"/>
        <end position="1150"/>
    </location>
</feature>
<feature type="helix" evidence="49">
    <location>
        <begin position="1153"/>
        <end position="1157"/>
    </location>
</feature>
<feature type="strand" evidence="50">
    <location>
        <begin position="1165"/>
        <end position="1167"/>
    </location>
</feature>
<feature type="strand" evidence="49">
    <location>
        <begin position="1169"/>
        <end position="1175"/>
    </location>
</feature>
<feature type="strand" evidence="49">
    <location>
        <begin position="1195"/>
        <end position="1197"/>
    </location>
</feature>
<feature type="strand" evidence="49">
    <location>
        <begin position="1200"/>
        <end position="1207"/>
    </location>
</feature>
<feature type="strand" evidence="49">
    <location>
        <begin position="1210"/>
        <end position="1215"/>
    </location>
</feature>
<feature type="helix" evidence="49">
    <location>
        <begin position="1219"/>
        <end position="1221"/>
    </location>
</feature>
<feature type="helix" evidence="49">
    <location>
        <begin position="1222"/>
        <end position="1232"/>
    </location>
</feature>
<feature type="turn" evidence="45">
    <location>
        <begin position="1398"/>
        <end position="1402"/>
    </location>
</feature>
<feature type="helix" evidence="45">
    <location>
        <begin position="1403"/>
        <end position="1414"/>
    </location>
</feature>
<feature type="helix" evidence="45">
    <location>
        <begin position="1415"/>
        <end position="1417"/>
    </location>
</feature>
<feature type="helix" evidence="45">
    <location>
        <begin position="1418"/>
        <end position="1424"/>
    </location>
</feature>
<feature type="helix" evidence="45">
    <location>
        <begin position="1429"/>
        <end position="1438"/>
    </location>
</feature>
<feature type="helix" evidence="45">
    <location>
        <begin position="1443"/>
        <end position="1458"/>
    </location>
</feature>
<feature type="helix" evidence="45">
    <location>
        <begin position="1459"/>
        <end position="1461"/>
    </location>
</feature>
<feature type="helix" evidence="45">
    <location>
        <begin position="1464"/>
        <end position="1473"/>
    </location>
</feature>
<feature type="helix" evidence="45">
    <location>
        <begin position="1477"/>
        <end position="1483"/>
    </location>
</feature>
<feature type="sequence conflict" description="In Ref. 4; AAC01950." evidence="27" ref="4">
    <original>T</original>
    <variation>P</variation>
    <location sequence="P16157-17">
        <position position="63"/>
    </location>
</feature>
<accession>P16157</accession>
<accession>A0PJN8</accession>
<accession>A6NJ23</accession>
<accession>E5RFL7</accession>
<accession>O43400</accession>
<accession>Q13768</accession>
<accession>Q53ER1</accession>
<accession>Q59FP2</accession>
<accession>Q8N604</accession>
<accession>Q99407</accession>
<reference key="1">
    <citation type="journal article" date="1990" name="Nature">
        <title>Analysis of cDNA for human erythrocyte ankyrin indicates a repeated structure with homology to tissue-differentiation and cell-cycle control proteins.</title>
        <authorList>
            <person name="Lux S.E."/>
            <person name="John K.M."/>
            <person name="Bennett V."/>
        </authorList>
    </citation>
    <scope>NUCLEOTIDE SEQUENCE [MRNA] (ISOFORMS ER1 AND ER2)</scope>
    <scope>PROTEIN SEQUENCE OF 3-30; 733-753; 828-871; 959-1003; 1106-1128; 1149-1168; 1282-1288; 1345-1367; 1383-1427; 1601-1626; 1686-1700 AND 1763-1772</scope>
    <scope>VARIANTS ALA-750 AND ILE-1075</scope>
    <source>
        <tissue>Hematopoietic</tissue>
    </source>
</reference>
<reference key="2">
    <citation type="journal article" date="1990" name="Proc. Natl. Acad. Sci. U.S.A.">
        <title>cDNA sequence for human erythrocyte ankyrin.</title>
        <authorList>
            <person name="Lambert S."/>
            <person name="Yu H."/>
            <person name="Prchal J.T."/>
            <person name="Lawler J."/>
            <person name="Ruff P."/>
            <person name="Speicher D."/>
            <person name="Cheung M.C."/>
            <person name="Kan Y.W."/>
            <person name="Palek J."/>
        </authorList>
    </citation>
    <scope>NUCLEOTIDE SEQUENCE [MRNA] (ISOFORMS ER1; ER5 AND ER16)</scope>
    <scope>VARIANTS ILE-1075 AND ILE-1546</scope>
</reference>
<reference key="3">
    <citation type="journal article" date="1997" name="J. Biol. Chem.">
        <title>Structure and organization of the human ankyrin-1 gene. Basis for complexity of pre-mRNA processing.</title>
        <authorList>
            <person name="Gallagher P.G."/>
            <person name="Tse W.T."/>
            <person name="Scarpa A.L."/>
            <person name="Lux S.E."/>
            <person name="Forget B.G."/>
        </authorList>
    </citation>
    <scope>NUCLEOTIDE SEQUENCE [GENOMIC DNA]</scope>
    <scope>ALTERNATIVE SPLICING</scope>
    <scope>VARIANTS LEU-991 AND ILE-1075</scope>
</reference>
<reference key="4">
    <citation type="journal article" date="1998" name="J. Biol. Chem.">
        <title>An alternate promoter directs expression of a truncated, muscle-specific isoform of the human ankyrin 1 gene.</title>
        <authorList>
            <person name="Gallagher P.G."/>
            <person name="Forget B.G."/>
        </authorList>
    </citation>
    <scope>NUCLEOTIDE SEQUENCE [MRNA] (ISOFORMS MU17; MU18; MU19 AND MU20)</scope>
    <scope>TISSUE SPECIFICITY</scope>
    <scope>SUBCELLULAR LOCATION</scope>
    <source>
        <tissue>Skeletal muscle</tissue>
    </source>
</reference>
<reference key="5">
    <citation type="submission" date="2005-03" db="EMBL/GenBank/DDBJ databases">
        <authorList>
            <person name="Totoki Y."/>
            <person name="Toyoda A."/>
            <person name="Takeda T."/>
            <person name="Sakaki Y."/>
            <person name="Tanaka A."/>
            <person name="Yokoyama S."/>
            <person name="Ohara O."/>
            <person name="Nagase T."/>
            <person name="Kikuno R.F."/>
        </authorList>
    </citation>
    <scope>NUCLEOTIDE SEQUENCE [LARGE SCALE MRNA] (ISOFORM BR21)</scope>
    <scope>VARIANT ILE-1075</scope>
    <source>
        <tissue>Brain</tissue>
    </source>
</reference>
<reference key="6">
    <citation type="journal article" date="2006" name="Nature">
        <title>DNA sequence and analysis of human chromosome 8.</title>
        <authorList>
            <person name="Nusbaum C."/>
            <person name="Mikkelsen T.S."/>
            <person name="Zody M.C."/>
            <person name="Asakawa S."/>
            <person name="Taudien S."/>
            <person name="Garber M."/>
            <person name="Kodira C.D."/>
            <person name="Schueler M.G."/>
            <person name="Shimizu A."/>
            <person name="Whittaker C.A."/>
            <person name="Chang J.L."/>
            <person name="Cuomo C.A."/>
            <person name="Dewar K."/>
            <person name="FitzGerald M.G."/>
            <person name="Yang X."/>
            <person name="Allen N.R."/>
            <person name="Anderson S."/>
            <person name="Asakawa T."/>
            <person name="Blechschmidt K."/>
            <person name="Bloom T."/>
            <person name="Borowsky M.L."/>
            <person name="Butler J."/>
            <person name="Cook A."/>
            <person name="Corum B."/>
            <person name="DeArellano K."/>
            <person name="DeCaprio D."/>
            <person name="Dooley K.T."/>
            <person name="Dorris L. III"/>
            <person name="Engels R."/>
            <person name="Gloeckner G."/>
            <person name="Hafez N."/>
            <person name="Hagopian D.S."/>
            <person name="Hall J.L."/>
            <person name="Ishikawa S.K."/>
            <person name="Jaffe D.B."/>
            <person name="Kamat A."/>
            <person name="Kudoh J."/>
            <person name="Lehmann R."/>
            <person name="Lokitsang T."/>
            <person name="Macdonald P."/>
            <person name="Major J.E."/>
            <person name="Matthews C.D."/>
            <person name="Mauceli E."/>
            <person name="Menzel U."/>
            <person name="Mihalev A.H."/>
            <person name="Minoshima S."/>
            <person name="Murayama Y."/>
            <person name="Naylor J.W."/>
            <person name="Nicol R."/>
            <person name="Nguyen C."/>
            <person name="O'Leary S.B."/>
            <person name="O'Neill K."/>
            <person name="Parker S.C.J."/>
            <person name="Polley A."/>
            <person name="Raymond C.K."/>
            <person name="Reichwald K."/>
            <person name="Rodriguez J."/>
            <person name="Sasaki T."/>
            <person name="Schilhabel M."/>
            <person name="Siddiqui R."/>
            <person name="Smith C.L."/>
            <person name="Sneddon T.P."/>
            <person name="Talamas J.A."/>
            <person name="Tenzin P."/>
            <person name="Topham K."/>
            <person name="Venkataraman V."/>
            <person name="Wen G."/>
            <person name="Yamazaki S."/>
            <person name="Young S.K."/>
            <person name="Zeng Q."/>
            <person name="Zimmer A.R."/>
            <person name="Rosenthal A."/>
            <person name="Birren B.W."/>
            <person name="Platzer M."/>
            <person name="Shimizu N."/>
            <person name="Lander E.S."/>
        </authorList>
    </citation>
    <scope>NUCLEOTIDE SEQUENCE [LARGE SCALE GENOMIC DNA]</scope>
</reference>
<reference key="7">
    <citation type="submission" date="2005-07" db="EMBL/GenBank/DDBJ databases">
        <authorList>
            <person name="Mural R.J."/>
            <person name="Istrail S."/>
            <person name="Sutton G.G."/>
            <person name="Florea L."/>
            <person name="Halpern A.L."/>
            <person name="Mobarry C.M."/>
            <person name="Lippert R."/>
            <person name="Walenz B."/>
            <person name="Shatkay H."/>
            <person name="Dew I."/>
            <person name="Miller J.R."/>
            <person name="Flanigan M.J."/>
            <person name="Edwards N.J."/>
            <person name="Bolanos R."/>
            <person name="Fasulo D."/>
            <person name="Halldorsson B.V."/>
            <person name="Hannenhalli S."/>
            <person name="Turner R."/>
            <person name="Yooseph S."/>
            <person name="Lu F."/>
            <person name="Nusskern D.R."/>
            <person name="Shue B.C."/>
            <person name="Zheng X.H."/>
            <person name="Zhong F."/>
            <person name="Delcher A.L."/>
            <person name="Huson D.H."/>
            <person name="Kravitz S.A."/>
            <person name="Mouchard L."/>
            <person name="Reinert K."/>
            <person name="Remington K.A."/>
            <person name="Clark A.G."/>
            <person name="Waterman M.S."/>
            <person name="Eichler E.E."/>
            <person name="Adams M.D."/>
            <person name="Hunkapiller M.W."/>
            <person name="Myers E.W."/>
            <person name="Venter J.C."/>
        </authorList>
    </citation>
    <scope>NUCLEOTIDE SEQUENCE [LARGE SCALE GENOMIC DNA]</scope>
</reference>
<reference key="8">
    <citation type="journal article" date="2004" name="Genome Res.">
        <title>The status, quality, and expansion of the NIH full-length cDNA project: the Mammalian Gene Collection (MGC).</title>
        <authorList>
            <consortium name="The MGC Project Team"/>
        </authorList>
    </citation>
    <scope>NUCLEOTIDE SEQUENCE [LARGE SCALE MRNA] (ISOFORMS MU17; 22 AND 23)</scope>
    <source>
        <tissue>B-cell</tissue>
        <tissue>Skeletal muscle</tissue>
    </source>
</reference>
<reference key="9">
    <citation type="journal article" date="1990" name="J. Biol. Chem.">
        <title>Mapping the binding sites of human erythrocyte ankyrin for the anion exchanger and spectrin.</title>
        <authorList>
            <person name="Davis L.H."/>
            <person name="Bennett V."/>
        </authorList>
    </citation>
    <scope>PROTEIN SEQUENCE OF 5-12; 403-422; 797-814; 862-877 AND 899-912</scope>
    <scope>DOMAINS SPTB AND SLC4A1 BINDING</scope>
    <scope>VARIANT ASP-1286</scope>
</reference>
<reference key="10">
    <citation type="journal article" date="2011" name="J. Biol. Chem.">
        <title>Asparagine and aspartate hydroxylation of the cytoskeletal ankyrin family is catalyzed by factor-inhibiting hypoxia-inducible factor.</title>
        <authorList>
            <person name="Yang M."/>
            <person name="Ge W."/>
            <person name="Chowdhury R."/>
            <person name="Claridge T.D."/>
            <person name="Kramer H.B."/>
            <person name="Schmierer B."/>
            <person name="McDonough M.A."/>
            <person name="Gong L."/>
            <person name="Kessler B.M."/>
            <person name="Ratcliffe P.J."/>
            <person name="Coleman M.L."/>
            <person name="Schofield C.J."/>
        </authorList>
    </citation>
    <scope>PROTEIN SEQUENCE OF 99-110; 129-169 AND 233-248</scope>
    <scope>INTERACTION WITH HIF1AN</scope>
    <scope>HYDROXYLATION AT ASN-105; ASN-233; ASN-431; ASN-464; ASN-629; ASN-662; ASP-695; ASN-728 AND ASN-761</scope>
</reference>
<reference key="11">
    <citation type="journal article" date="1995" name="J. Biol. Chem.">
        <title>The ANK repeats of erythrocyte ankyrin form two distinct but cooperative binding sites for the erythrocyte anion exchanger.</title>
        <authorList>
            <person name="Michaely P."/>
            <person name="Bennett V."/>
        </authorList>
    </citation>
    <scope>INTERACTION WITH SLC4A1</scope>
</reference>
<reference key="12">
    <citation type="journal article" date="2003" name="J. Biol. Chem.">
        <title>The hydrophilic domain of small ankyrin-1 interacts with the two N-terminal immunoglobulin domains of titin.</title>
        <authorList>
            <person name="Kontrogianni-Konstantopoulos A."/>
            <person name="Bloch R.J."/>
        </authorList>
    </citation>
    <scope>INTERACTION WITH TTN</scope>
</reference>
<reference key="13">
    <citation type="journal article" date="2003" name="J. Cell Biol.">
        <title>Binding of an ankyrin-1 isoform to obscurin suggests a molecular link between the sarcoplasmic reticulum and myofibrils in striated muscles.</title>
        <authorList>
            <person name="Bagnato P."/>
            <person name="Barone V."/>
            <person name="Giacomello E."/>
            <person name="Rossi D."/>
            <person name="Sorrentino V."/>
        </authorList>
    </citation>
    <scope>SUBCELLULAR LOCATION</scope>
    <scope>INTERACTION WITH OBSCN</scope>
    <scope>MUTAGENESIS OF THR-1824; LYS-1826; ARG-1829 AND LYS-1830</scope>
    <scope>FUNCTION</scope>
</reference>
<reference key="14">
    <citation type="journal article" date="2008" name="J. Proteome Res.">
        <title>Phosphoproteome of resting human platelets.</title>
        <authorList>
            <person name="Zahedi R.P."/>
            <person name="Lewandrowski U."/>
            <person name="Wiesner J."/>
            <person name="Wortelkamp S."/>
            <person name="Moebius J."/>
            <person name="Schuetz C."/>
            <person name="Walter U."/>
            <person name="Gambaryan S."/>
            <person name="Sickmann A."/>
        </authorList>
    </citation>
    <scope>IDENTIFICATION BY MASS SPECTROMETRY [LARGE SCALE ANALYSIS]</scope>
    <source>
        <tissue>Platelet</tissue>
    </source>
</reference>
<reference key="15">
    <citation type="journal article" date="2008" name="Proc. Natl. Acad. Sci. U.S.A.">
        <title>A quantitative atlas of mitotic phosphorylation.</title>
        <authorList>
            <person name="Dephoure N."/>
            <person name="Zhou C."/>
            <person name="Villen J."/>
            <person name="Beausoleil S.A."/>
            <person name="Bakalarski C.E."/>
            <person name="Elledge S.J."/>
            <person name="Gygi S.P."/>
        </authorList>
    </citation>
    <scope>IDENTIFICATION BY MASS SPECTROMETRY [LARGE SCALE ANALYSIS]</scope>
    <source>
        <tissue>Cervix carcinoma</tissue>
    </source>
</reference>
<reference key="16">
    <citation type="journal article" date="2011" name="BMC Syst. Biol.">
        <title>Initial characterization of the human central proteome.</title>
        <authorList>
            <person name="Burkard T.R."/>
            <person name="Planyavsky M."/>
            <person name="Kaupe I."/>
            <person name="Breitwieser F.P."/>
            <person name="Buerckstuemmer T."/>
            <person name="Bennett K.L."/>
            <person name="Superti-Furga G."/>
            <person name="Colinge J."/>
        </authorList>
    </citation>
    <scope>IDENTIFICATION BY MASS SPECTROMETRY [LARGE SCALE ANALYSIS]</scope>
</reference>
<reference key="17">
    <citation type="journal article" date="2013" name="J. Proteome Res.">
        <title>Toward a comprehensive characterization of a human cancer cell phosphoproteome.</title>
        <authorList>
            <person name="Zhou H."/>
            <person name="Di Palma S."/>
            <person name="Preisinger C."/>
            <person name="Peng M."/>
            <person name="Polat A.N."/>
            <person name="Heck A.J."/>
            <person name="Mohammed S."/>
        </authorList>
    </citation>
    <scope>PHOSPHORYLATION [LARGE SCALE ANALYSIS] AT SER-429; SER-759; SER-781; SER-856; THR-1378; THR-1380; SER-1396; SER-1486; SER-1666; SER-1671; SER-1686; SER-1690 AND SER-1696</scope>
    <scope>IDENTIFICATION BY MASS SPECTROMETRY [LARGE SCALE ANALYSIS]</scope>
    <source>
        <tissue>Cervix carcinoma</tissue>
        <tissue>Erythroleukemia</tissue>
    </source>
</reference>
<reference key="18">
    <citation type="journal article" date="2014" name="J. Proteomics">
        <title>An enzyme assisted RP-RPLC approach for in-depth analysis of human liver phosphoproteome.</title>
        <authorList>
            <person name="Bian Y."/>
            <person name="Song C."/>
            <person name="Cheng K."/>
            <person name="Dong M."/>
            <person name="Wang F."/>
            <person name="Huang J."/>
            <person name="Sun D."/>
            <person name="Wang L."/>
            <person name="Ye M."/>
            <person name="Zou H."/>
        </authorList>
    </citation>
    <scope>PHOSPHORYLATION [LARGE SCALE ANALYSIS] AT SER-781; SER-817; SER-834; SER-856; SER-1428; SER-1523 AND SER-1533</scope>
    <scope>IDENTIFICATION BY MASS SPECTROMETRY [LARGE SCALE ANALYSIS]</scope>
    <source>
        <tissue>Liver</tissue>
    </source>
</reference>
<reference key="19">
    <citation type="journal article" date="2018" name="Nat. Microbiol.">
        <title>A protease cascade regulates release of the human malaria parasite Plasmodium falciparum from host red blood cells.</title>
        <authorList>
            <person name="Thomas J.A."/>
            <person name="Tan M.S.Y."/>
            <person name="Bisson C."/>
            <person name="Borg A."/>
            <person name="Umrekar T.R."/>
            <person name="Hackett F."/>
            <person name="Hale V.L."/>
            <person name="Vizcay-Barrena G."/>
            <person name="Fleck R.A."/>
            <person name="Snijders A.P."/>
            <person name="Saibil H.R."/>
            <person name="Blackman M.J."/>
        </authorList>
    </citation>
    <scope>PROTEOLYTIC CLEAVAGE (MICROBIAL INFECTION)</scope>
</reference>
<reference evidence="29" key="20">
    <citation type="journal article" date="2002" name="EMBO J.">
        <title>Crystal structure of a 12 ANK repeat stack from human ankyrinR.</title>
        <authorList>
            <person name="Michaely P."/>
            <person name="Tomchick D.R."/>
            <person name="Machius M."/>
            <person name="Anderson R.G."/>
        </authorList>
    </citation>
    <scope>X-RAY CRYSTALLOGRAPHY (2.7 ANGSTROMS) OF 402-827</scope>
    <scope>FUNCTION OF ANK REPEAT DOMAIN</scope>
</reference>
<reference key="21">
    <citation type="submission" date="2008-04" db="PDB data bank">
        <title>Solution structure of the DEATH domain of ankyrin-1.</title>
        <authorList>
            <consortium name="RIKEN structural genomics initiative (RSGI)"/>
        </authorList>
    </citation>
    <scope>STRUCTURE BY NMR OF 1392-1497</scope>
</reference>
<reference evidence="30 31" key="22">
    <citation type="journal article" date="2012" name="J. Mol. Biol.">
        <title>Structurally similar but functionally diverse ZU5 domains in human erythrocyte ankyrin.</title>
        <authorList>
            <person name="Yasunaga M."/>
            <person name="Ipsaro J.J."/>
            <person name="Mondragon A."/>
        </authorList>
    </citation>
    <scope>X-RAY CRYSTALLOGRAPHY (2.0 ANGSTROMS) OF 911-1233</scope>
    <scope>DOMAINS ZU5</scope>
</reference>
<reference evidence="32 33 34 35 36 37 38 39 40 41" key="23">
    <citation type="journal article" date="2022" name="Nat. Struct. Mol. Biol.">
        <title>Architecture of the human erythrocyte ankyrin-1 complex.</title>
        <authorList>
            <person name="Vallese F."/>
            <person name="Kim K."/>
            <person name="Yen L.Y."/>
            <person name="Johnston J.D."/>
            <person name="Noble A.J."/>
            <person name="Cali T."/>
            <person name="Clarke O.B."/>
        </authorList>
    </citation>
    <scope>STRUCTURE BY ELECTRON MICROSCOPY (2.17 ANGSTROMS) OF 1-201</scope>
    <scope>FUNCTION</scope>
    <scope>SUBUNIT</scope>
    <scope>ANKYRIN-1 COMPLEX IDENTIFICATION</scope>
    <scope>DOMAIN</scope>
    <scope>INTERACTION WITH RHCE; AQP1; EPB42 AND SLC4A1</scope>
</reference>
<reference key="24">
    <citation type="journal article" date="1996" name="Nat. Genet.">
        <title>Ankyrin-1 mutations are a major cause of dominant and recessive hereditary spherocytosis.</title>
        <authorList>
            <person name="Eber S.W."/>
            <person name="Gonzalez J.M."/>
            <person name="Lux M.L."/>
            <person name="Scarpa A.L."/>
            <person name="Tse W.T."/>
            <person name="Dornwell M."/>
            <person name="Herbers J."/>
            <person name="Kugler W."/>
            <person name="Oezcan R."/>
            <person name="Pekrun A."/>
            <person name="Gallagher P.G."/>
            <person name="Schroeter W."/>
            <person name="Forget B.G."/>
            <person name="Lux S.E."/>
        </authorList>
    </citation>
    <scope>VARIANT SPH1 ILE-463</scope>
</reference>
<reference key="25">
    <citation type="journal article" date="2000" name="Hum. Mutat.">
        <title>Low frequency of ankyrin mutations in hereditary spherocytosis: identification of three novel mutations.</title>
        <authorList>
            <person name="Leite R.C.A."/>
            <person name="Basseres D.S."/>
            <person name="Ferreira J.S."/>
            <person name="Alberto F.L."/>
            <person name="Costa F.F."/>
            <person name="Saad S.T.O."/>
        </authorList>
    </citation>
    <scope>VARIANTS SPH1 ARG-276 AND THR-1054</scope>
</reference>
<reference key="26">
    <citation type="journal article" date="2006" name="Science">
        <title>The consensus coding sequences of human breast and colorectal cancers.</title>
        <authorList>
            <person name="Sjoeblom T."/>
            <person name="Jones S."/>
            <person name="Wood L.D."/>
            <person name="Parsons D.W."/>
            <person name="Lin J."/>
            <person name="Barber T.D."/>
            <person name="Mandelker D."/>
            <person name="Leary R.J."/>
            <person name="Ptak J."/>
            <person name="Silliman N."/>
            <person name="Szabo S."/>
            <person name="Buckhaults P."/>
            <person name="Farrell C."/>
            <person name="Meeh P."/>
            <person name="Markowitz S.D."/>
            <person name="Willis J."/>
            <person name="Dawson D."/>
            <person name="Willson J.K.V."/>
            <person name="Gazdar A.F."/>
            <person name="Hartigan J."/>
            <person name="Wu L."/>
            <person name="Liu C."/>
            <person name="Parmigiani G."/>
            <person name="Park B.H."/>
            <person name="Bachman K.E."/>
            <person name="Papadopoulos N."/>
            <person name="Vogelstein B."/>
            <person name="Kinzler K.W."/>
            <person name="Velculescu V.E."/>
        </authorList>
    </citation>
    <scope>VARIANT [LARGE SCALE ANALYSIS] HIS-332</scope>
</reference>
<comment type="function">
    <text evidence="8 16">Component of the ankyrin-1 complex, a multiprotein complex involved in the stability and shape of the erythrocyte membrane (PubMed:35835865). Attaches integral membrane proteins to cytoskeletal elements; binds to the erythrocyte membrane protein band 4.2, to Na-K ATPase, to the lymphocyte membrane protein GP85, and to the cytoskeletal proteins fodrin, tubulin, vimentin and desmin. Erythrocyte ankyrins also link spectrin (beta chain) to the cytoplasmic domain of the erythrocytes anion exchange protein; they retain most or all of these binding functions.</text>
</comment>
<comment type="function">
    <molecule>Isoform Mu17</molecule>
    <text evidence="9">Together with obscurin in skeletal muscle may provide a molecular link between the sarcoplasmic reticulum and myofibrils.</text>
</comment>
<comment type="subunit">
    <text evidence="7 9 12 16 17">Component of the ankyrin-1 complex in the erythrocyte, composed of ANK1, RHCE, RHAG, SLC4A1, EPB42, GYPA, GYPB and AQP1 (PubMed:35835865). Interacts with a number of integral membrane proteins and cytoskeletal proteins. Interacts (via N-terminus) with SPTB/spectrin (beta chain). Also interacts with TTN/titin. Isoform Mu17 interacts with OBSCN isoform 3/obscurin. Interacts with HIF1AN. Interacts (via ANK 1-5 repeats) with RHCE; this interaction mediates the primary membrane attachment site for ANK1 (PubMed:35835865). Interacts (via ANK 1-2 repeats) with AQP1 (via the N-terminal) (PubMed:35835865). Interacts (via ANK 1-13 repeats) with EPB42 (PubMed:35835865). Interacts directly with SLC4A1 (via the cytoplasmic domain); this interaction is mediated by the SLC4A1 Band 3-II and Band 3-III dimers (PubMed:35835865, PubMed:7665627).</text>
</comment>
<comment type="interaction">
    <interactant intactId="EBI-941686">
        <id>P16157</id>
    </interactant>
    <interactant intactId="EBI-941921">
        <id>Q5VST9-3</id>
        <label>OBSCN</label>
    </interactant>
    <organismsDiffer>false</organismsDiffer>
    <experiments>3</experiments>
</comment>
<comment type="interaction">
    <interactant intactId="EBI-941819">
        <id>P16157-17</id>
    </interactant>
    <interactant intactId="EBI-489887">
        <id>P50402</id>
        <label>EMD</label>
    </interactant>
    <organismsDiffer>false</organismsDiffer>
    <experiments>3</experiments>
</comment>
<comment type="interaction">
    <interactant intactId="EBI-941819">
        <id>P16157-17</id>
    </interactant>
    <interactant intactId="EBI-4319440">
        <id>P54849</id>
        <label>EMP1</label>
    </interactant>
    <organismsDiffer>false</organismsDiffer>
    <experiments>3</experiments>
</comment>
<comment type="interaction">
    <interactant intactId="EBI-941819">
        <id>P16157-17</id>
    </interactant>
    <interactant intactId="EBI-12175685">
        <id>Q14802-3</id>
        <label>FXYD3</label>
    </interactant>
    <organismsDiffer>false</organismsDiffer>
    <experiments>3</experiments>
</comment>
<comment type="interaction">
    <interactant intactId="EBI-941819">
        <id>P16157-17</id>
    </interactant>
    <interactant intactId="EBI-10262547">
        <id>Q8IXM6</id>
        <label>NRM</label>
    </interactant>
    <organismsDiffer>false</organismsDiffer>
    <experiments>3</experiments>
</comment>
<comment type="interaction">
    <interactant intactId="EBI-941819">
        <id>P16157-17</id>
    </interactant>
    <interactant intactId="EBI-941921">
        <id>Q5VST9-3</id>
        <label>OBSCN</label>
    </interactant>
    <organismsDiffer>false</organismsDiffer>
    <experiments>8</experiments>
</comment>
<comment type="interaction">
    <interactant intactId="EBI-941819">
        <id>P16157-17</id>
    </interactant>
    <interactant intactId="EBI-3232108">
        <id>Q8N0V3</id>
        <label>RBFA</label>
    </interactant>
    <organismsDiffer>false</organismsDiffer>
    <experiments>3</experiments>
</comment>
<comment type="interaction">
    <interactant intactId="EBI-941819">
        <id>P16157-17</id>
    </interactant>
    <interactant intactId="EBI-10244780">
        <id>Q5QGT7</id>
        <label>RTP2</label>
    </interactant>
    <organismsDiffer>false</organismsDiffer>
    <experiments>3</experiments>
</comment>
<comment type="interaction">
    <interactant intactId="EBI-941819">
        <id>P16157-17</id>
    </interactant>
    <interactant intactId="EBI-10262251">
        <id>Q8IWU4</id>
        <label>SLC30A8</label>
    </interactant>
    <organismsDiffer>false</organismsDiffer>
    <experiments>3</experiments>
</comment>
<comment type="interaction">
    <interactant intactId="EBI-941819">
        <id>P16157-17</id>
    </interactant>
    <interactant intactId="EBI-12200293">
        <id>P0DN84</id>
        <label>STRIT1</label>
    </interactant>
    <organismsDiffer>false</organismsDiffer>
    <experiments>3</experiments>
</comment>
<comment type="interaction">
    <interactant intactId="EBI-941819">
        <id>P16157-17</id>
    </interactant>
    <interactant intactId="EBI-12274070">
        <id>Q969S6</id>
        <label>TMEM203</label>
    </interactant>
    <organismsDiffer>false</organismsDiffer>
    <experiments>3</experiments>
</comment>
<comment type="subcellular location">
    <molecule>Isoform Er1</molecule>
    <subcellularLocation>
        <location>Cytoplasm</location>
        <location>Cytoskeleton</location>
    </subcellularLocation>
    <text>Probably the other erythrocyte (Er) isoforms, are located near the surface of erythrocytic plasma membrane.</text>
</comment>
<comment type="subcellular location">
    <molecule>Isoform Mu17</molecule>
    <subcellularLocation>
        <location>Membrane</location>
    </subcellularLocation>
    <subcellularLocation>
        <location>Cytoplasm</location>
        <location>Myofibril</location>
        <location>Sarcomere</location>
        <location>M line</location>
    </subcellularLocation>
    <text>Colocalizes with OBSCN isoform 3/obscurin at the M line in differentiated skeletal muscle cells.</text>
</comment>
<comment type="subcellular location">
    <molecule>Isoform Mu18</molecule>
    <subcellularLocation>
        <location evidence="27">Sarcoplasmic reticulum</location>
    </subcellularLocation>
</comment>
<comment type="subcellular location">
    <molecule>Isoform Mu19</molecule>
    <subcellularLocation>
        <location evidence="27">Sarcoplasmic reticulum</location>
    </subcellularLocation>
</comment>
<comment type="subcellular location">
    <molecule>Isoform Mu20</molecule>
    <subcellularLocation>
        <location evidence="27">Sarcoplasmic reticulum</location>
    </subcellularLocation>
</comment>
<comment type="alternative products">
    <event type="alternative promoter"/>
    <event type="alternative splicing"/>
    <isoform>
        <id>P16157-1</id>
        <name>Er1</name>
        <name>1</name>
        <name>2.1</name>
        <sequence type="displayed"/>
    </isoform>
    <isoform>
        <id>P16157-4</id>
        <name>Er2</name>
        <name>2</name>
        <name>2.2</name>
        <sequence type="described" ref="VSP_018442"/>
    </isoform>
    <isoform>
        <id>P16157-5</id>
        <name>Er3</name>
        <name>3</name>
        <sequence type="described" ref="VSP_018449"/>
    </isoform>
    <isoform>
        <id>P16157-6</id>
        <name>Er4</name>
        <name>4</name>
        <sequence type="described" ref="VSP_018442 VSP_018449"/>
    </isoform>
    <isoform>
        <id>P16157-3</id>
        <name>Er5</name>
        <name>5</name>
        <sequence type="described" ref="VSP_000266"/>
    </isoform>
    <isoform>
        <id>P16157-7</id>
        <name>Er6</name>
        <name>6</name>
        <sequence type="described" ref="VSP_018442 VSP_000266"/>
    </isoform>
    <isoform>
        <id>P16157-8</id>
        <name>Er7</name>
        <name>7</name>
        <sequence type="described" ref="VSP_018447"/>
    </isoform>
    <isoform>
        <id>P16157-9</id>
        <name>Er8</name>
        <name>8</name>
        <sequence type="described" ref="VSP_018442 VSP_018447"/>
    </isoform>
    <isoform>
        <id>P16157-10</id>
        <name>Er9</name>
        <name>9</name>
        <sequence type="described" ref="VSP_018445"/>
    </isoform>
    <isoform>
        <id>P16157-11</id>
        <name>Er10</name>
        <name>10</name>
        <sequence type="described" ref="VSP_018442 VSP_018445"/>
    </isoform>
    <isoform>
        <id>P16157-12</id>
        <name>Er11</name>
        <name>11</name>
        <sequence type="described" ref="VSP_018450"/>
    </isoform>
    <isoform>
        <id>P16157-13</id>
        <name>Er12</name>
        <name>12</name>
        <sequence type="described" ref="VSP_018442 VSP_018450"/>
    </isoform>
    <isoform>
        <id>P16157-14</id>
        <name>Er13</name>
        <name>13</name>
        <sequence type="described" ref="VSP_018451"/>
    </isoform>
    <isoform>
        <id>P16157-15</id>
        <name>Er14</name>
        <name>14</name>
        <sequence type="described" ref="VSP_018442 VSP_018451"/>
    </isoform>
    <isoform>
        <id>P16157-16</id>
        <name>Er15</name>
        <name>15</name>
        <sequence type="described" ref="VSP_018448"/>
    </isoform>
    <isoform>
        <id>P16157-2</id>
        <name>Er16</name>
        <sequence type="described" ref="VSP_000264 VSP_000265"/>
    </isoform>
    <isoform>
        <id>P16157-17</id>
        <name>Mu17</name>
        <name>ank1.5</name>
        <name>muscle-specific 1</name>
        <sequence type="described" ref="VSP_018440 VSP_018443 VSP_000266"/>
    </isoform>
    <isoform>
        <id>P16157-18</id>
        <name>Mu18</name>
        <name>ank1.6</name>
        <name>muscle-specific 2</name>
        <sequence type="described" ref="VSP_018440 VSP_018443 VSP_018448"/>
    </isoform>
    <isoform>
        <id>P16157-19</id>
        <name>Mu19</name>
        <name>muscle-specific 3</name>
        <sequence type="described" ref="VSP_018440 VSP_018443 VSP_018445"/>
    </isoform>
    <isoform>
        <id>P16157-20</id>
        <name>Mu20</name>
        <name>muscle-specific 4</name>
        <sequence type="described" ref="VSP_018440 VSP_018444 VSP_018446"/>
    </isoform>
    <isoform>
        <id>P16157-21</id>
        <name>Br21</name>
        <sequence type="described" ref="VSP_018439 VSP_018441 VSP_018449"/>
    </isoform>
    <isoform>
        <id>P16157-22</id>
        <name>22</name>
        <sequence type="described" ref="VSP_018440 VSP_018443 VSP_045439"/>
    </isoform>
    <isoform>
        <id>P16157-23</id>
        <name>23</name>
        <sequence type="described" ref="VSP_018440 VSP_018443"/>
    </isoform>
</comment>
<comment type="tissue specificity">
    <text evidence="20">Isoform Mu17, isoform Mu18, isoform Mu19 and isoform Mu20 are expressed in skeletal muscle. Isoform Br21 is expressed in brain.</text>
</comment>
<comment type="domain">
    <text>The 55 kDa regulatory domain is involved in regulating binding of SPTB/spectrin (beta chain) and SLC4A1/erythrocyte membrane protein band 3.</text>
</comment>
<comment type="domain">
    <text evidence="16">The ANK repeat region forms a spiral around a large central cavity and is involved in binding of ion transporters. Adopts a T-shaped arrangement, in the ankyrin-1 complex, in which ANK 1-5 repeats are orthogonal to ANK 6-24 repeats, with the peptide binding groove of ANK 1-5 repeats oriented toward the membrane (PubMed:35835865). The rearrangement of the ANK 1-5 repeats orients the canonical protein binding groove to directly face the membrane, to interact the membrane-embedded targets RHCE and AQP1 (PubMed:35835865).</text>
</comment>
<comment type="domain">
    <text evidence="1">The tandem configuration of the two ZU5 and the UPA domains forms a structural supramodule termed ZZU. ZU5-1 mediates interaction with beta-spectrin, and the ZU5-1/UPA interface is required for ankyrin's function other than binding to spectrin (By similarity).</text>
</comment>
<comment type="PTM">
    <text>Regulated by phosphorylation.</text>
</comment>
<comment type="PTM">
    <text>Palmitoylated.</text>
</comment>
<comment type="PTM">
    <text evidence="12">Hydroxylated by HIF1AN at several asparagine and 1 aspartate residue within ANK repeat region. Hydroxylation seems to increase the conformational stability of this region and may also modulate protein-protein interactions mediated by the ANK repeat region.</text>
</comment>
<comment type="PTM">
    <text evidence="15">(Microbial infection) Probably cleaved by P.falciparum SERA6; the cleavage probably causes the disruption of the actin cytoskeleton and the rupture of the erythrocyte cell membrane releasing the merozoites.</text>
</comment>
<comment type="disease" evidence="6 18">
    <disease id="DI-02321">
        <name>Spherocytosis 1</name>
        <acronym>SPH1</acronym>
        <description>A form of spherocytosis, a hematologic disorder leading to chronic hemolytic anemia and characterized by numerous abnormally shaped erythrocytes which are generally spheroidal. SPH1 is characterized by severe hemolytic anemia. Inheritance can be autosomal dominant or autosomal recessive. Patients with homozygous mutations have a more severe disorder.</description>
        <dbReference type="MIM" id="182900"/>
    </disease>
    <text>The disease is caused by variants affecting the gene represented in this entry.</text>
</comment>
<comment type="miscellaneous">
    <molecule>Isoform Er1</molecule>
    <text>Major erythrocyte-specific isoform. Produced by alternative promoter usage.</text>
</comment>
<comment type="miscellaneous">
    <molecule>Isoform Er2</molecule>
    <text evidence="27">Predominant form of minor erythrocyte-specific isoforms. Produced by alternative splicing of isoform Er1.</text>
</comment>
<comment type="miscellaneous">
    <molecule>Isoform Er3</molecule>
    <text evidence="27">Produced by alternative splicing of isoform Er1.</text>
</comment>
<comment type="miscellaneous">
    <molecule>Isoform Er4</molecule>
    <text evidence="27">Produced by alternative splicing of isoform Er1.</text>
</comment>
<comment type="miscellaneous">
    <molecule>Isoform Er5</molecule>
    <text evidence="27">Produced by alternative splicing of isoform Er1.</text>
</comment>
<comment type="miscellaneous">
    <molecule>Isoform Er6</molecule>
    <text evidence="27">Produced by alternative splicing of isoform Er1.</text>
</comment>
<comment type="miscellaneous">
    <molecule>Isoform Er7</molecule>
    <text evidence="27">Produced by alternative splicing of isoform Er1.</text>
</comment>
<comment type="miscellaneous">
    <molecule>Isoform Er9</molecule>
    <text evidence="27">Produced by alternative splicing of isoform Er1.</text>
</comment>
<comment type="miscellaneous">
    <molecule>Isoform Er10</molecule>
    <text evidence="27">Produced by alternative splicing of isoform Er1.</text>
</comment>
<comment type="miscellaneous">
    <molecule>Isoform Er11</molecule>
    <text evidence="27">Produced by alternative splicing of isoform Er1.</text>
</comment>
<comment type="miscellaneous">
    <molecule>Isoform Er12</molecule>
    <text evidence="27">Produced by alternative splicing of isoform Er1.</text>
</comment>
<comment type="miscellaneous">
    <molecule>Isoform Er13</molecule>
    <text evidence="27">Produced by alternative splicing of isoform Er1.</text>
</comment>
<comment type="miscellaneous">
    <molecule>Isoform Er14</molecule>
    <text evidence="27">Produced by alternative splicing of isoform Er1.</text>
</comment>
<comment type="miscellaneous">
    <molecule>Isoform Er15</molecule>
    <text evidence="27">Produced by alternative splicing of isoform Er1.</text>
</comment>
<comment type="miscellaneous">
    <molecule>Isoform Er16</molecule>
    <text evidence="27">Produced by alternative splicing of isoform Er1.</text>
</comment>
<comment type="miscellaneous">
    <molecule>Isoform Mu17</molecule>
    <text evidence="27">Produced by alternative promoter usage.</text>
</comment>
<comment type="miscellaneous">
    <molecule>Isoform Mu18</molecule>
    <text evidence="27">Produced by alternative splicing of isoform Mu17.</text>
</comment>
<comment type="miscellaneous">
    <molecule>Isoform Mu19</molecule>
    <text evidence="27">Produced by alternative splicing of isoform Mu17.</text>
</comment>
<comment type="miscellaneous">
    <molecule>Isoform Mu20</molecule>
    <text evidence="27">Produced by alternative splicing of isoform Mu17.</text>
</comment>
<comment type="miscellaneous">
    <molecule>Isoform Br21</molecule>
    <text evidence="27">Produced by alternative splicing of isoform Er1.</text>
</comment>
<comment type="miscellaneous">
    <molecule>Isoform 22</molecule>
    <text evidence="27">Produced by alternative splicing.</text>
</comment>
<comment type="sequence caution" evidence="27">
    <conflict type="erroneous gene model prediction">
        <sequence resource="EMBL-CDS" id="AAB47805"/>
    </conflict>
</comment>
<comment type="online information" name="Wikipedia">
    <link uri="https://en.wikipedia.org/wiki/Ankyrin"/>
    <text>Ankyrin entry</text>
</comment>
<proteinExistence type="evidence at protein level"/>